<name>ITF2_HUMAN</name>
<feature type="chain" id="PRO_0000127256" description="Transcription factor 4">
    <location>
        <begin position="1"/>
        <end position="667"/>
    </location>
</feature>
<feature type="domain" description="bHLH" evidence="3">
    <location>
        <begin position="564"/>
        <end position="617"/>
    </location>
</feature>
<feature type="region of interest" description="Essential for MYOD1 inhibition" evidence="1">
    <location>
        <begin position="1"/>
        <end position="83"/>
    </location>
</feature>
<feature type="region of interest" description="Disordered" evidence="4">
    <location>
        <begin position="24"/>
        <end position="245"/>
    </location>
</feature>
<feature type="region of interest" description="Disordered" evidence="4">
    <location>
        <begin position="263"/>
        <end position="321"/>
    </location>
</feature>
<feature type="region of interest" description="Disordered" evidence="4">
    <location>
        <begin position="336"/>
        <end position="379"/>
    </location>
</feature>
<feature type="region of interest" description="Leucine-zipper">
    <location>
        <begin position="379"/>
        <end position="400"/>
    </location>
</feature>
<feature type="region of interest" description="Disordered" evidence="4">
    <location>
        <begin position="466"/>
        <end position="570"/>
    </location>
</feature>
<feature type="region of interest" description="Class A specific domain">
    <location>
        <begin position="619"/>
        <end position="642"/>
    </location>
</feature>
<feature type="region of interest" description="Disordered" evidence="4">
    <location>
        <begin position="634"/>
        <end position="667"/>
    </location>
</feature>
<feature type="short sequence motif" description="9aaTAD">
    <location>
        <begin position="18"/>
        <end position="26"/>
    </location>
</feature>
<feature type="compositionally biased region" description="Polar residues" evidence="4">
    <location>
        <begin position="29"/>
        <end position="49"/>
    </location>
</feature>
<feature type="compositionally biased region" description="Polar residues" evidence="4">
    <location>
        <begin position="107"/>
        <end position="126"/>
    </location>
</feature>
<feature type="compositionally biased region" description="Polar residues" evidence="4">
    <location>
        <begin position="137"/>
        <end position="155"/>
    </location>
</feature>
<feature type="compositionally biased region" description="Polar residues" evidence="4">
    <location>
        <begin position="205"/>
        <end position="216"/>
    </location>
</feature>
<feature type="compositionally biased region" description="Polar residues" evidence="4">
    <location>
        <begin position="266"/>
        <end position="306"/>
    </location>
</feature>
<feature type="compositionally biased region" description="Low complexity" evidence="4">
    <location>
        <begin position="337"/>
        <end position="348"/>
    </location>
</feature>
<feature type="compositionally biased region" description="Polar residues" evidence="4">
    <location>
        <begin position="365"/>
        <end position="374"/>
    </location>
</feature>
<feature type="compositionally biased region" description="Low complexity" evidence="4">
    <location>
        <begin position="467"/>
        <end position="480"/>
    </location>
</feature>
<feature type="compositionally biased region" description="Low complexity" evidence="4">
    <location>
        <begin position="503"/>
        <end position="512"/>
    </location>
</feature>
<feature type="compositionally biased region" description="Basic and acidic residues" evidence="4">
    <location>
        <begin position="527"/>
        <end position="542"/>
    </location>
</feature>
<feature type="compositionally biased region" description="Basic and acidic residues" evidence="4">
    <location>
        <begin position="555"/>
        <end position="570"/>
    </location>
</feature>
<feature type="modified residue" description="Phosphoserine" evidence="27">
    <location>
        <position position="66"/>
    </location>
</feature>
<feature type="modified residue" description="Phosphoserine" evidence="27">
    <location>
        <position position="87"/>
    </location>
</feature>
<feature type="modified residue" description="Phosphoserine" evidence="27">
    <location>
        <position position="92"/>
    </location>
</feature>
<feature type="modified residue" description="Phosphoserine" evidence="2">
    <location>
        <position position="372"/>
    </location>
</feature>
<feature type="modified residue" description="Phosphoserine" evidence="26">
    <location>
        <position position="515"/>
    </location>
</feature>
<feature type="splice variant" id="VSP_054279" description="In isoform I-." evidence="23">
    <location>
        <begin position="1"/>
        <end position="216"/>
    </location>
</feature>
<feature type="splice variant" id="VSP_030819" description="In isoform SEF2-1A." evidence="20 22 23 24">
    <location>
        <begin position="1"/>
        <end position="160"/>
    </location>
</feature>
<feature type="splice variant" id="VSP_045149" description="In isoform D-." evidence="20 23">
    <location>
        <begin position="1"/>
        <end position="130"/>
    </location>
</feature>
<feature type="splice variant" id="VSP_045150" description="In isoform 11." evidence="20">
    <original>MHHQQRMAALGTDKELSDLLDFSAMFSPPVSSGKNGPTSLASGHFTGSNVEDRSSSGSWGNGGHPSPSRNYGDGTPYDHMTSRDLGSHDNLSPPFVNSRIQS</original>
    <variation>MKDIFFQFIIARVRKCYSLSCLHTLPVVPTLR</variation>
    <location>
        <begin position="1"/>
        <end position="102"/>
    </location>
</feature>
<feature type="splice variant" id="VSP_045151" description="In isoform F-." evidence="20 23">
    <original>MHHQQRMAALGTDKELSDLLDFSAMFSPPVSSGKNGPTSLASGHFTGSN</original>
    <variation>MEEDSRD</variation>
    <location>
        <begin position="1"/>
        <end position="49"/>
    </location>
</feature>
<feature type="splice variant" id="VSP_044334" description="In isoform G-." evidence="23">
    <original>MHHQQRMAALGTDKELSDLLDFSAMFSPPVSS</original>
    <variation>MKDIFFQFIIARVRKCYSLSCLHTLPVVPTLR</variation>
    <location>
        <begin position="1"/>
        <end position="32"/>
    </location>
</feature>
<feature type="splice variant" id="VSP_047081" description="In isoform 13, isoform C- and isoform C-delta." evidence="20 23">
    <location>
        <begin position="1"/>
        <end position="24"/>
    </location>
</feature>
<feature type="splice variant" id="VSP_047082" description="In isoform E-." evidence="23">
    <original>MHHQQRMAALGTDKELSDLLDFSA</original>
    <variation>MQRAKTELFRLQIVTDDLRKNE</variation>
    <location>
        <begin position="1"/>
        <end position="24"/>
    </location>
</feature>
<feature type="splice variant" id="VSP_044336" description="In isoform A-." evidence="23">
    <original>MHHQQRMAALGTDKELSDLLDFS</original>
    <variation>MYCAYTIPGMGGNSLMYYYNGKA</variation>
    <location>
        <begin position="1"/>
        <end position="23"/>
    </location>
</feature>
<feature type="splice variant" id="VSP_044335" description="In isoform H-." evidence="23">
    <original>MHHQQRMAALGTDKELSDLLDFS</original>
    <variation>MKFKQCRCSDTGLCCLDHEGKAE</variation>
    <location>
        <begin position="1"/>
        <end position="23"/>
    </location>
</feature>
<feature type="splice variant" id="VSP_057364" description="In isoform H-." evidence="23">
    <location>
        <begin position="24"/>
        <end position="183"/>
    </location>
</feature>
<feature type="splice variant" id="VSP_044337" description="In isoform A-." evidence="23">
    <location>
        <begin position="24"/>
        <end position="123"/>
    </location>
</feature>
<feature type="splice variant" id="VSP_044338" description="In isoform G-." evidence="23">
    <location>
        <begin position="33"/>
        <end position="102"/>
    </location>
</feature>
<feature type="splice variant" id="VSP_044339" description="In isoform G- and isoform 11." evidence="20 23">
    <location>
        <position position="123"/>
    </location>
</feature>
<feature type="splice variant" id="VSP_044340" description="In isoform A-, isoform B-delta, isoform B+delta and isoform C-delta." evidence="23">
    <location>
        <begin position="124"/>
        <end position="183"/>
    </location>
</feature>
<feature type="splice variant" id="VSP_002111" description="In isoform SEF2-1A." evidence="20 22 23 24">
    <original>LHSSAMEVQTKKVRKVPPGLPSS</original>
    <variation>MYCAYTIPGMGGNSLMYYYNGKA</variation>
    <location>
        <begin position="161"/>
        <end position="183"/>
    </location>
</feature>
<feature type="splice variant" id="VSP_047083" description="In isoform E-." evidence="23">
    <location>
        <position position="357"/>
    </location>
</feature>
<feature type="splice variant" id="VSP_002112" description="In isoform B+delta, isoform SEF2-1A, isoform SEF2-1D, isoform 11 and isoform 13." evidence="20 21 22 23 24">
    <original>T</original>
    <variation>TRSRS</variation>
    <location>
        <position position="545"/>
    </location>
</feature>
<feature type="sequence variant" id="VAR_079726" description="Found in a family with symmetrical acral keratoderma; likely pathogenic." evidence="19">
    <original>P</original>
    <variation>T</variation>
    <location>
        <position position="29"/>
    </location>
</feature>
<feature type="sequence variant" id="VAR_066839" description="In PTHS; also expressed in the nucleus with a pattern indistinguishable from the wild-type; does not have a major impact on homodimer formation; affects transcriptional activity in a context-dependent manner." evidence="8 12">
    <original>G</original>
    <variation>V</variation>
    <location>
        <position position="358"/>
    </location>
</feature>
<feature type="sequence variant" id="VAR_078644" description="In PTHS." evidence="16">
    <location>
        <begin position="385"/>
        <end position="667"/>
    </location>
</feature>
<feature type="sequence variant" id="VAR_049545" description="In dbSNP:rs11660217.">
    <original>M</original>
    <variation>I</variation>
    <location>
        <position position="450"/>
    </location>
</feature>
<feature type="sequence variant" id="VAR_058632" description="In PTHS; loss of function; also expressed in the nucleus with a pattern indistinguishable from the wild-type; does not have a major impact on homodimer formation; affects transcriptional activity in a context-dependent manner." evidence="9 12">
    <original>D</original>
    <variation>G</variation>
    <location>
        <position position="535"/>
    </location>
</feature>
<feature type="sequence variant" id="VAR_066970" description="In PTHS." evidence="11">
    <original>R</original>
    <variation>W</variation>
    <location>
        <position position="565"/>
    </location>
</feature>
<feature type="sequence variant" id="VAR_058633" description="In PTHS; loss of function." evidence="9 11">
    <original>R</original>
    <variation>G</variation>
    <location>
        <position position="572"/>
    </location>
</feature>
<feature type="sequence variant" id="VAR_066971" description="In PTHS; dbSNP:rs1057521070." evidence="11">
    <original>R</original>
    <variation>Q</variation>
    <location>
        <position position="572"/>
    </location>
</feature>
<feature type="sequence variant" id="VAR_066972" description="In PTHS; dbSNP:rs121909123." evidence="11">
    <original>R</original>
    <variation>H</variation>
    <location>
        <position position="574"/>
    </location>
</feature>
<feature type="sequence variant" id="VAR_066840" description="In PTHS; mislocalized to small spherical punctae that are dispersed throughout the nucleus; can attenuate homo- and heterodimer formation; affects transcriptional activity in a context-dependent manner; dbSNP:rs121909123." evidence="8 11 12">
    <original>R</original>
    <variation>P</variation>
    <location>
        <position position="574"/>
    </location>
</feature>
<feature type="sequence variant" id="VAR_034704" description="In PTHS; loss of function; dbSNP:rs121909121." evidence="5 9 11">
    <original>R</original>
    <variation>Q</variation>
    <location>
        <position position="576"/>
    </location>
</feature>
<feature type="sequence variant" id="VAR_034705" description="In PTHS; mislocalized to small spherical punctae that are dispersed throughout the nucleus; can attenuate homo- and heterodimer formation; affects transcriptional activity in a context-dependent manner; dbSNP:rs121909120." evidence="5 6 11 12">
    <original>R</original>
    <variation>W</variation>
    <location>
        <position position="576"/>
    </location>
</feature>
<feature type="sequence variant" id="VAR_066841" description="In PTHS." evidence="8">
    <original>R</original>
    <variation>H</variation>
    <location>
        <position position="578"/>
    </location>
</feature>
<feature type="sequence variant" id="VAR_066973" description="In PTHS." evidence="10 11">
    <original>R</original>
    <variation>P</variation>
    <location>
        <position position="578"/>
    </location>
</feature>
<feature type="sequence variant" id="VAR_066974" description="In PTHS." evidence="11">
    <original>A</original>
    <variation>P</variation>
    <location>
        <position position="583"/>
    </location>
</feature>
<feature type="sequence variant" id="VAR_058634" description="In PTHS; loss of function; mislocalized to small spherical punctae that are dispersed throughout the nucleus; can attenuate homo- and heterodimer formation; affects transcriptional activity in a context-dependent manner." evidence="9 11 12">
    <original>A</original>
    <variation>V</variation>
    <location>
        <position position="610"/>
    </location>
</feature>
<feature type="sequence conflict" description="In Ref. 9; CAA36298." evidence="25" ref="9">
    <original>TGSN</original>
    <variation>EFGG</variation>
    <location>
        <begin position="46"/>
        <end position="49"/>
    </location>
</feature>
<feature type="sequence conflict" description="In Ref. 7; AV761952." evidence="25" ref="7">
    <location>
        <position position="205"/>
    </location>
</feature>
<feature type="sequence conflict" description="In Ref. 9; CAA36298." evidence="25" ref="9">
    <original>P</original>
    <variation>S</variation>
    <location>
        <position position="334"/>
    </location>
</feature>
<feature type="helix" evidence="28">
    <location>
        <begin position="15"/>
        <end position="25"/>
    </location>
</feature>
<feature type="helix" evidence="29">
    <location>
        <begin position="565"/>
        <end position="594"/>
    </location>
</feature>
<feature type="helix" evidence="29">
    <location>
        <begin position="603"/>
        <end position="622"/>
    </location>
</feature>
<organism>
    <name type="scientific">Homo sapiens</name>
    <name type="common">Human</name>
    <dbReference type="NCBI Taxonomy" id="9606"/>
    <lineage>
        <taxon>Eukaryota</taxon>
        <taxon>Metazoa</taxon>
        <taxon>Chordata</taxon>
        <taxon>Craniata</taxon>
        <taxon>Vertebrata</taxon>
        <taxon>Euteleostomi</taxon>
        <taxon>Mammalia</taxon>
        <taxon>Eutheria</taxon>
        <taxon>Euarchontoglires</taxon>
        <taxon>Primates</taxon>
        <taxon>Haplorrhini</taxon>
        <taxon>Catarrhini</taxon>
        <taxon>Hominidae</taxon>
        <taxon>Homo</taxon>
    </lineage>
</organism>
<proteinExistence type="evidence at protein level"/>
<reference key="1">
    <citation type="journal article" date="1991" name="J. Virol.">
        <title>Helix-loop-helix transcriptional activators bind to a sequence in glucocorticoid response elements of retrovirus enhancers.</title>
        <authorList>
            <person name="Corneliussen B."/>
            <person name="Thornell A."/>
            <person name="Hallberg B."/>
            <person name="Grundstroem T."/>
        </authorList>
    </citation>
    <scope>NUCLEOTIDE SEQUENCE [MRNA] (ISOFORMS SEF2-1A; SEF2-1B AND SEF2-1D)</scope>
    <scope>ALTERNATIVE SPLICING (ISOFORM SEF2-1C)</scope>
    <source>
        <tissue>Thymocyte</tissue>
        <tissue>Thymus</tissue>
    </source>
</reference>
<reference key="2">
    <citation type="journal article" date="2011" name="PLoS ONE">
        <title>Functional diversity of human basic helix-loop-helix transcription factor TCF4 isoforms generated by alternative 5' exon usage and splicing.</title>
        <authorList>
            <person name="Sepp M."/>
            <person name="Kannike K."/>
            <person name="Eesmaa A."/>
            <person name="Urb M."/>
            <person name="Timmusk T."/>
        </authorList>
    </citation>
    <scope>NUCLEOTIDE SEQUENCE [MRNA] (ISOFORMS A-; B-DELTA; B+DELTA; C-; C-DELTA; D-; E-; F-; G-; H-; I-; SEF2-1A; SEF2-1B AND SEF2-1D)</scope>
    <scope>ALTERNATIVE SPLICING</scope>
</reference>
<reference key="3">
    <citation type="journal article" date="2004" name="Nat. Genet.">
        <title>Complete sequencing and characterization of 21,243 full-length human cDNAs.</title>
        <authorList>
            <person name="Ota T."/>
            <person name="Suzuki Y."/>
            <person name="Nishikawa T."/>
            <person name="Otsuki T."/>
            <person name="Sugiyama T."/>
            <person name="Irie R."/>
            <person name="Wakamatsu A."/>
            <person name="Hayashi K."/>
            <person name="Sato H."/>
            <person name="Nagai K."/>
            <person name="Kimura K."/>
            <person name="Makita H."/>
            <person name="Sekine M."/>
            <person name="Obayashi M."/>
            <person name="Nishi T."/>
            <person name="Shibahara T."/>
            <person name="Tanaka T."/>
            <person name="Ishii S."/>
            <person name="Yamamoto J."/>
            <person name="Saito K."/>
            <person name="Kawai Y."/>
            <person name="Isono Y."/>
            <person name="Nakamura Y."/>
            <person name="Nagahari K."/>
            <person name="Murakami K."/>
            <person name="Yasuda T."/>
            <person name="Iwayanagi T."/>
            <person name="Wagatsuma M."/>
            <person name="Shiratori A."/>
            <person name="Sudo H."/>
            <person name="Hosoiri T."/>
            <person name="Kaku Y."/>
            <person name="Kodaira H."/>
            <person name="Kondo H."/>
            <person name="Sugawara M."/>
            <person name="Takahashi M."/>
            <person name="Kanda K."/>
            <person name="Yokoi T."/>
            <person name="Furuya T."/>
            <person name="Kikkawa E."/>
            <person name="Omura Y."/>
            <person name="Abe K."/>
            <person name="Kamihara K."/>
            <person name="Katsuta N."/>
            <person name="Sato K."/>
            <person name="Tanikawa M."/>
            <person name="Yamazaki M."/>
            <person name="Ninomiya K."/>
            <person name="Ishibashi T."/>
            <person name="Yamashita H."/>
            <person name="Murakawa K."/>
            <person name="Fujimori K."/>
            <person name="Tanai H."/>
            <person name="Kimata M."/>
            <person name="Watanabe M."/>
            <person name="Hiraoka S."/>
            <person name="Chiba Y."/>
            <person name="Ishida S."/>
            <person name="Ono Y."/>
            <person name="Takiguchi S."/>
            <person name="Watanabe S."/>
            <person name="Yosida M."/>
            <person name="Hotuta T."/>
            <person name="Kusano J."/>
            <person name="Kanehori K."/>
            <person name="Takahashi-Fujii A."/>
            <person name="Hara H."/>
            <person name="Tanase T.-O."/>
            <person name="Nomura Y."/>
            <person name="Togiya S."/>
            <person name="Komai F."/>
            <person name="Hara R."/>
            <person name="Takeuchi K."/>
            <person name="Arita M."/>
            <person name="Imose N."/>
            <person name="Musashino K."/>
            <person name="Yuuki H."/>
            <person name="Oshima A."/>
            <person name="Sasaki N."/>
            <person name="Aotsuka S."/>
            <person name="Yoshikawa Y."/>
            <person name="Matsunawa H."/>
            <person name="Ichihara T."/>
            <person name="Shiohata N."/>
            <person name="Sano S."/>
            <person name="Moriya S."/>
            <person name="Momiyama H."/>
            <person name="Satoh N."/>
            <person name="Takami S."/>
            <person name="Terashima Y."/>
            <person name="Suzuki O."/>
            <person name="Nakagawa S."/>
            <person name="Senoh A."/>
            <person name="Mizoguchi H."/>
            <person name="Goto Y."/>
            <person name="Shimizu F."/>
            <person name="Wakebe H."/>
            <person name="Hishigaki H."/>
            <person name="Watanabe T."/>
            <person name="Sugiyama A."/>
            <person name="Takemoto M."/>
            <person name="Kawakami B."/>
            <person name="Yamazaki M."/>
            <person name="Watanabe K."/>
            <person name="Kumagai A."/>
            <person name="Itakura S."/>
            <person name="Fukuzumi Y."/>
            <person name="Fujimori Y."/>
            <person name="Komiyama M."/>
            <person name="Tashiro H."/>
            <person name="Tanigami A."/>
            <person name="Fujiwara T."/>
            <person name="Ono T."/>
            <person name="Yamada K."/>
            <person name="Fujii Y."/>
            <person name="Ozaki K."/>
            <person name="Hirao M."/>
            <person name="Ohmori Y."/>
            <person name="Kawabata A."/>
            <person name="Hikiji T."/>
            <person name="Kobatake N."/>
            <person name="Inagaki H."/>
            <person name="Ikema Y."/>
            <person name="Okamoto S."/>
            <person name="Okitani R."/>
            <person name="Kawakami T."/>
            <person name="Noguchi S."/>
            <person name="Itoh T."/>
            <person name="Shigeta K."/>
            <person name="Senba T."/>
            <person name="Matsumura K."/>
            <person name="Nakajima Y."/>
            <person name="Mizuno T."/>
            <person name="Morinaga M."/>
            <person name="Sasaki M."/>
            <person name="Togashi T."/>
            <person name="Oyama M."/>
            <person name="Hata H."/>
            <person name="Watanabe M."/>
            <person name="Komatsu T."/>
            <person name="Mizushima-Sugano J."/>
            <person name="Satoh T."/>
            <person name="Shirai Y."/>
            <person name="Takahashi Y."/>
            <person name="Nakagawa K."/>
            <person name="Okumura K."/>
            <person name="Nagase T."/>
            <person name="Nomura N."/>
            <person name="Kikuchi H."/>
            <person name="Masuho Y."/>
            <person name="Yamashita R."/>
            <person name="Nakai K."/>
            <person name="Yada T."/>
            <person name="Nakamura Y."/>
            <person name="Ohara O."/>
            <person name="Isogai T."/>
            <person name="Sugano S."/>
        </authorList>
    </citation>
    <scope>NUCLEOTIDE SEQUENCE [LARGE SCALE MRNA] (ISOFORMS SEF2-1A; C-; D-; F-; 11 AND 13)</scope>
    <source>
        <tissue>Brain</tissue>
        <tissue>Hippocampus</tissue>
        <tissue>Spleen</tissue>
        <tissue>Teratocarcinoma</tissue>
    </source>
</reference>
<reference key="4">
    <citation type="journal article" date="2005" name="Nature">
        <title>DNA sequence and analysis of human chromosome 18.</title>
        <authorList>
            <person name="Nusbaum C."/>
            <person name="Zody M.C."/>
            <person name="Borowsky M.L."/>
            <person name="Kamal M."/>
            <person name="Kodira C.D."/>
            <person name="Taylor T.D."/>
            <person name="Whittaker C.A."/>
            <person name="Chang J.L."/>
            <person name="Cuomo C.A."/>
            <person name="Dewar K."/>
            <person name="FitzGerald M.G."/>
            <person name="Yang X."/>
            <person name="Abouelleil A."/>
            <person name="Allen N.R."/>
            <person name="Anderson S."/>
            <person name="Bloom T."/>
            <person name="Bugalter B."/>
            <person name="Butler J."/>
            <person name="Cook A."/>
            <person name="DeCaprio D."/>
            <person name="Engels R."/>
            <person name="Garber M."/>
            <person name="Gnirke A."/>
            <person name="Hafez N."/>
            <person name="Hall J.L."/>
            <person name="Norman C.H."/>
            <person name="Itoh T."/>
            <person name="Jaffe D.B."/>
            <person name="Kuroki Y."/>
            <person name="Lehoczky J."/>
            <person name="Lui A."/>
            <person name="Macdonald P."/>
            <person name="Mauceli E."/>
            <person name="Mikkelsen T.S."/>
            <person name="Naylor J.W."/>
            <person name="Nicol R."/>
            <person name="Nguyen C."/>
            <person name="Noguchi H."/>
            <person name="O'Leary S.B."/>
            <person name="Piqani B."/>
            <person name="Smith C.L."/>
            <person name="Talamas J.A."/>
            <person name="Topham K."/>
            <person name="Totoki Y."/>
            <person name="Toyoda A."/>
            <person name="Wain H.M."/>
            <person name="Young S.K."/>
            <person name="Zeng Q."/>
            <person name="Zimmer A.R."/>
            <person name="Fujiyama A."/>
            <person name="Hattori M."/>
            <person name="Birren B.W."/>
            <person name="Sakaki Y."/>
            <person name="Lander E.S."/>
        </authorList>
    </citation>
    <scope>NUCLEOTIDE SEQUENCE [LARGE SCALE GENOMIC DNA]</scope>
</reference>
<reference key="5">
    <citation type="submission" date="2005-07" db="EMBL/GenBank/DDBJ databases">
        <authorList>
            <person name="Mural R.J."/>
            <person name="Istrail S."/>
            <person name="Sutton G.G."/>
            <person name="Florea L."/>
            <person name="Halpern A.L."/>
            <person name="Mobarry C.M."/>
            <person name="Lippert R."/>
            <person name="Walenz B."/>
            <person name="Shatkay H."/>
            <person name="Dew I."/>
            <person name="Miller J.R."/>
            <person name="Flanigan M.J."/>
            <person name="Edwards N.J."/>
            <person name="Bolanos R."/>
            <person name="Fasulo D."/>
            <person name="Halldorsson B.V."/>
            <person name="Hannenhalli S."/>
            <person name="Turner R."/>
            <person name="Yooseph S."/>
            <person name="Lu F."/>
            <person name="Nusskern D.R."/>
            <person name="Shue B.C."/>
            <person name="Zheng X.H."/>
            <person name="Zhong F."/>
            <person name="Delcher A.L."/>
            <person name="Huson D.H."/>
            <person name="Kravitz S.A."/>
            <person name="Mouchard L."/>
            <person name="Reinert K."/>
            <person name="Remington K.A."/>
            <person name="Clark A.G."/>
            <person name="Waterman M.S."/>
            <person name="Eichler E.E."/>
            <person name="Adams M.D."/>
            <person name="Hunkapiller M.W."/>
            <person name="Myers E.W."/>
            <person name="Venter J.C."/>
        </authorList>
    </citation>
    <scope>NUCLEOTIDE SEQUENCE [LARGE SCALE GENOMIC DNA]</scope>
</reference>
<reference key="6">
    <citation type="journal article" date="2004" name="Genome Res.">
        <title>The status, quality, and expansion of the NIH full-length cDNA project: the Mammalian Gene Collection (MGC).</title>
        <authorList>
            <consortium name="The MGC Project Team"/>
        </authorList>
    </citation>
    <scope>NUCLEOTIDE SEQUENCE [LARGE SCALE MRNA] (ISOFORMS SEF2-1B AND SEF2-1D)</scope>
</reference>
<reference key="7">
    <citation type="submission" date="2000-10" db="EMBL/GenBank/DDBJ databases">
        <title>MDSDCE06_MDS Homo sapiens cDNA clone MDSDCE06 5',mRNA sequence.</title>
        <authorList>
            <person name="Gu J."/>
            <person name="Zhao M."/>
            <person name="Huang Q."/>
            <person name="Xu X."/>
            <person name="Li Y."/>
            <person name="Peng Y."/>
            <person name="Song H."/>
            <person name="Xiao H."/>
            <person name="Gu Y."/>
            <person name="Li N."/>
            <person name="Qian B."/>
            <person name="Liu F."/>
            <person name="Qu J."/>
            <person name="Gao X."/>
            <person name="Cheng Z."/>
            <person name="Xu Z."/>
            <person name="Zeng L."/>
            <person name="Xu S."/>
            <person name="Gu W."/>
            <person name="Tu Y."/>
            <person name="Jia J."/>
            <person name="Fu G."/>
            <person name="Ren S."/>
            <person name="Zhong M."/>
            <person name="Lu G."/>
            <person name="Yang Y."/>
            <person name="Gao G."/>
            <person name="Zhang Q."/>
            <person name="Chen S."/>
            <person name="Han Z."/>
            <person name="Chen Z."/>
        </authorList>
    </citation>
    <scope>NUCLEOTIDE SEQUENCE [MRNA] OF 1-278 (ISOFORM SEF2-1A)</scope>
</reference>
<reference key="8">
    <citation type="journal article" date="1997" name="Hum. Mol. Genet.">
        <title>A novel, heritable, expanding CTG repeat in an intron of the SEF2-1 gene on chromosome 18q21.1.</title>
        <authorList>
            <person name="Breschel T.S."/>
            <person name="McInnis M.G."/>
            <person name="Margolis R.L."/>
            <person name="Sirugo G."/>
            <person name="Corneliussen B."/>
            <person name="Simpson S.G."/>
            <person name="McMahon F.J."/>
            <person name="Mackinnon D.F."/>
            <person name="Xu J.F."/>
            <person name="Pleasant N."/>
            <person name="Huo Y."/>
            <person name="Ashworth R.G."/>
            <person name="Grundstrom C."/>
            <person name="Grundstrom T."/>
            <person name="Kidd K.K."/>
            <person name="Depaulo J.R."/>
            <person name="Ross C.A."/>
        </authorList>
    </citation>
    <scope>NUCLEOTIDE SEQUENCE [GENOMIC DNA] OF 25-48</scope>
    <source>
        <tissue>Skin fibroblast</tissue>
    </source>
</reference>
<reference key="9">
    <citation type="journal article" date="1990" name="Nucleic Acids Res.">
        <title>Sequence of the cDNA encoding ITF-2, a positive-acting transcription factor.</title>
        <authorList>
            <person name="Henthorn P."/>
            <person name="McCarrick-Walmsley R."/>
            <person name="Kadesch T."/>
        </authorList>
    </citation>
    <scope>NUCLEOTIDE SEQUENCE [MRNA] OF 46-667 (ISOFORM SEF2-1B)</scope>
</reference>
<reference key="10">
    <citation type="journal article" date="1990" name="Science">
        <title>Two distinct transcription factors that bind the immunoglobulin enhancer microE5/kappa 2 motif.</title>
        <authorList>
            <person name="Henthorn P."/>
            <person name="Kiledjian M."/>
            <person name="Kadesch T."/>
        </authorList>
    </citation>
    <scope>DISCUSSION OF SEQUENCE</scope>
</reference>
<reference key="11">
    <citation type="journal article" date="2007" name="Genomics">
        <title>Nine-amino-acid transactivation domain: establishment and prediction utilities.</title>
        <authorList>
            <person name="Piskacek S."/>
            <person name="Gregor M."/>
            <person name="Nemethova M."/>
            <person name="Grabner M."/>
            <person name="Kovarik P."/>
            <person name="Piskacek M."/>
        </authorList>
    </citation>
    <scope>DOMAIN</scope>
</reference>
<reference key="12">
    <citation type="journal article" date="2011" name="Sci. Signal.">
        <title>System-wide temporal characterization of the proteome and phosphoproteome of human embryonic stem cell differentiation.</title>
        <authorList>
            <person name="Rigbolt K.T."/>
            <person name="Prokhorova T.A."/>
            <person name="Akimov V."/>
            <person name="Henningsen J."/>
            <person name="Johansen P.T."/>
            <person name="Kratchmarova I."/>
            <person name="Kassem M."/>
            <person name="Mann M."/>
            <person name="Olsen J.V."/>
            <person name="Blagoev B."/>
        </authorList>
    </citation>
    <scope>PHOSPHORYLATION [LARGE SCALE ANALYSIS] AT SER-515</scope>
    <scope>IDENTIFICATION BY MASS SPECTROMETRY [LARGE SCALE ANALYSIS]</scope>
</reference>
<reference key="13">
    <citation type="journal article" date="2012" name="Hum. Mutat.">
        <title>Functional analysis of TCF4 missense mutations that cause Pitt-Hopkins syndrome.</title>
        <authorList>
            <person name="Forrest M."/>
            <person name="Chapman R.M."/>
            <person name="Doyle A.M."/>
            <person name="Tinsley C.L."/>
            <person name="Waite A."/>
            <person name="Blake D.J."/>
        </authorList>
    </citation>
    <scope>SUBCELLULAR LOCATION</scope>
    <scope>CHARACTERIZATION OF VARIANTS PTHS VAL-358; GLY-535; PRO-574; TRP-576 AND VAL-610</scope>
</reference>
<reference key="14">
    <citation type="journal article" date="2013" name="Am. J. Hum. Genet.">
        <title>Mutations in AGBL1 cause dominant late-onset Fuchs corneal dystrophy and alter protein-protein interaction with TCF4.</title>
        <authorList>
            <person name="Riazuddin S.A."/>
            <person name="Vasanth S."/>
            <person name="Katsanis N."/>
            <person name="Gottsch J.D."/>
        </authorList>
    </citation>
    <scope>INTERACTION WITH AGBL1</scope>
</reference>
<reference key="15">
    <citation type="journal article" date="2013" name="J. Proteome Res.">
        <title>Toward a comprehensive characterization of a human cancer cell phosphoproteome.</title>
        <authorList>
            <person name="Zhou H."/>
            <person name="Di Palma S."/>
            <person name="Preisinger C."/>
            <person name="Peng M."/>
            <person name="Polat A.N."/>
            <person name="Heck A.J."/>
            <person name="Mohammed S."/>
        </authorList>
    </citation>
    <scope>PHOSPHORYLATION [LARGE SCALE ANALYSIS] AT SER-66; SER-87 AND SER-92</scope>
    <scope>IDENTIFICATION BY MASS SPECTROMETRY [LARGE SCALE ANALYSIS]</scope>
    <source>
        <tissue>Erythroleukemia</tissue>
    </source>
</reference>
<reference key="16">
    <citation type="journal article" date="2014" name="Am. J. Hum. Genet.">
        <title>Mutations affecting the BHLHA9 DNA-binding domain cause MSSD, mesoaxial synostotic syndactyly with phalangeal reduction, Malik-Percin type.</title>
        <authorList>
            <person name="Malik S."/>
            <person name="Percin F.E."/>
            <person name="Bornholdt D."/>
            <person name="Albrecht B."/>
            <person name="Percesepe A."/>
            <person name="Koch M.C."/>
            <person name="Landi A."/>
            <person name="Fritz B."/>
            <person name="Khan R."/>
            <person name="Mumtaz S."/>
            <person name="Akarsu N.A."/>
            <person name="Grzeschik K.H."/>
        </authorList>
    </citation>
    <scope>INTERACTION WITH BHLHA9</scope>
</reference>
<reference key="17">
    <citation type="journal article" date="2014" name="Invest. Ophthalmol. Vis. Sci.">
        <title>Association and familial segregation of CTG18.1 trinucleotide repeat expansion of TCF4 gene in Fuchs' endothelial corneal dystrophy.</title>
        <authorList>
            <person name="Mootha V.V."/>
            <person name="Gong X."/>
            <person name="Ku H.C."/>
            <person name="Xing C."/>
        </authorList>
    </citation>
    <scope>INVOLVEMENT IN FECD3</scope>
</reference>
<reference key="18">
    <citation type="journal article" date="2014" name="Invest. Ophthalmol. Vis. Sci.">
        <title>Comprehensive assessment of genetic variants within TCF4 in Fuchs' endothelial corneal dystrophy.</title>
        <authorList>
            <person name="Wieben E.D."/>
            <person name="Aleff R.A."/>
            <person name="Eckloff B.W."/>
            <person name="Atkinson E.J."/>
            <person name="Baheti S."/>
            <person name="Middha S."/>
            <person name="Brown W.L."/>
            <person name="Patel S.V."/>
            <person name="Kocher J.P."/>
            <person name="Baratz K.H."/>
        </authorList>
    </citation>
    <scope>INVOLVEMENT IN FECD3</scope>
</reference>
<reference key="19">
    <citation type="journal article" date="2015" name="J. Biol. Chem.">
        <title>RNA toxicity and missplicing in the common eye disease fuchs endothelial corneal dystrophy.</title>
        <authorList>
            <person name="Du J."/>
            <person name="Aleff R.A."/>
            <person name="Soragni E."/>
            <person name="Kalari K."/>
            <person name="Nie J."/>
            <person name="Tang X."/>
            <person name="Davila J."/>
            <person name="Kocher J.P."/>
            <person name="Patel S.V."/>
            <person name="Gottesfeld J.M."/>
            <person name="Baratz K.H."/>
            <person name="Wieben E.D."/>
        </authorList>
    </citation>
    <scope>INVOLVEMENT IN FECD3</scope>
</reference>
<reference key="20">
    <citation type="journal article" date="2018" name="J. Eur. Acad. Dermatol. Venereol.">
        <title>Exome sequencing identifies a TCF4 mutation in a Chinese pedigree with symmetrical acral keratoderma.</title>
        <authorList>
            <person name="Chen P."/>
            <person name="Sun S."/>
            <person name="Zeng K."/>
            <person name="Li C."/>
            <person name="Wen J."/>
            <person name="Liang J."/>
            <person name="Tian X."/>
            <person name="Jiang Y."/>
            <person name="Zhang J."/>
            <person name="Zhang S."/>
            <person name="Han K."/>
            <person name="Han C."/>
            <person name="Zhang X."/>
        </authorList>
    </citation>
    <scope>POSSIBLE INVOLVEMENT IN SYMMETRICAL ACRAL KERATODERMA</scope>
    <scope>VARIANT THR-29</scope>
</reference>
<reference key="21">
    <citation type="journal article" date="2007" name="Am. J. Hum. Genet.">
        <title>Mutations in TCF4, encoding a class I basic helix-loop-helix transcription factor, are responsible for Pitt-Hopkins syndrome, a severe epileptic encephalopathy associated with autonomic dysfunction.</title>
        <authorList>
            <person name="Amiel J."/>
            <person name="Rio M."/>
            <person name="de Pontual L."/>
            <person name="Redon R."/>
            <person name="Malan V."/>
            <person name="Boddaert N."/>
            <person name="Plouin P."/>
            <person name="Carter N.P."/>
            <person name="Lyonnet S."/>
            <person name="Munnich A."/>
            <person name="Colleaux L."/>
        </authorList>
    </citation>
    <scope>VARIANTS PTHS TRP-576 AND GLN-576</scope>
</reference>
<reference key="22">
    <citation type="journal article" date="2007" name="Am. J. Hum. Genet.">
        <title>Haploinsufficiency of TCF4 causes syndromal mental retardation with intermittent hyperventilation (Pitt-Hopkins syndrome).</title>
        <authorList>
            <person name="Zweier C."/>
            <person name="Peippo M.M."/>
            <person name="Hoyer J."/>
            <person name="Sousa S."/>
            <person name="Bottani A."/>
            <person name="Clayton-Smith J."/>
            <person name="Reardon W."/>
            <person name="Saraiva J."/>
            <person name="Cabral A."/>
            <person name="Goehring I."/>
            <person name="Devriendt K."/>
            <person name="de Ravel T."/>
            <person name="Bijlsma E.K."/>
            <person name="Hennekam R.C.M."/>
            <person name="Orrico A."/>
            <person name="Cohen M."/>
            <person name="Dreweke A."/>
            <person name="Reis A."/>
            <person name="Nuernberg P."/>
            <person name="Rauch A."/>
        </authorList>
    </citation>
    <scope>VARIANT PTHS TRP-576</scope>
</reference>
<reference key="23">
    <citation type="journal article" date="2008" name="J. Med. Genet.">
        <title>Further delineation of Pitt-Hopkins syndrome: phenotypic and genotypic description of 16 novel patients.</title>
        <authorList>
            <person name="Zweier C."/>
            <person name="Sticht H."/>
            <person name="Bijlsma E.K."/>
            <person name="Clayton-Smith J."/>
            <person name="Boonen S.E."/>
            <person name="Fryer A."/>
            <person name="Greally M.T."/>
            <person name="Hoffmann L."/>
            <person name="den Hollander N.S."/>
            <person name="Jongmans M."/>
            <person name="Kant S.G."/>
            <person name="King M.D."/>
            <person name="Lynch S.A."/>
            <person name="McKee S."/>
            <person name="Midro A.T."/>
            <person name="Park S.M."/>
            <person name="Ricotti V."/>
            <person name="Tarantino E."/>
            <person name="Wessels M."/>
            <person name="Peippo M."/>
            <person name="Rauch A."/>
        </authorList>
    </citation>
    <scope>VARIANTS PTHS VAL-358; PRO-574 AND HIS-578</scope>
</reference>
<reference key="24">
    <citation type="journal article" date="2009" name="Hum. Mutat.">
        <title>Mutational, functional, and expression studies of the TCF4 gene in Pitt-Hopkins syndrome.</title>
        <authorList>
            <person name="de Pontual L."/>
            <person name="Mathieu Y."/>
            <person name="Golzio C."/>
            <person name="Rio M."/>
            <person name="Malan V."/>
            <person name="Boddaert N."/>
            <person name="Soufflet C."/>
            <person name="Picard C."/>
            <person name="Durandy A."/>
            <person name="Dobbie A."/>
            <person name="Heron D."/>
            <person name="Isidor B."/>
            <person name="Motte J."/>
            <person name="Newburry-Ecob R."/>
            <person name="Pasquier L."/>
            <person name="Tardieu M."/>
            <person name="Viot G."/>
            <person name="Jaubert F."/>
            <person name="Munnich A."/>
            <person name="Colleaux L."/>
            <person name="Vekemans M."/>
            <person name="Etchevers H."/>
            <person name="Lyonnet S."/>
            <person name="Amiel J."/>
        </authorList>
    </citation>
    <scope>VARIANTS PTHS GLY-535; GLY-572; GLN-576 AND VAL-610</scope>
    <scope>CHARACTERIZATION OF VARIANTS PTHS GLY-535; GLY-572; GLN-576 AND VAL-610</scope>
</reference>
<reference key="25">
    <citation type="journal article" date="2010" name="Clin. Genet.">
        <title>Two percent of patients suspected of having Angelman syndrome have TCF4 mutations.</title>
        <authorList>
            <person name="Takano K."/>
            <person name="Lyons M."/>
            <person name="Moyes C."/>
            <person name="Jones J."/>
            <person name="Schwartz C.E."/>
        </authorList>
    </citation>
    <scope>VARIANT PTHS PRO-578</scope>
</reference>
<reference key="26">
    <citation type="journal article" date="2012" name="Hum. Mutat.">
        <title>Novel comprehensive diagnostic strategy in Pitt-Hopkins syndrome: clinical score and further delineation of the TCF4 mutational spectrum.</title>
        <authorList>
            <person name="Whalen S."/>
            <person name="Heron D."/>
            <person name="Gaillon T."/>
            <person name="Moldovan O."/>
            <person name="Rossi M."/>
            <person name="Devillard F."/>
            <person name="Giuliano F."/>
            <person name="Soares G."/>
            <person name="Mathieu-Dramard M."/>
            <person name="Afenjar A."/>
            <person name="Charles P."/>
            <person name="Mignot C."/>
            <person name="Burglen L."/>
            <person name="Van Maldergem L."/>
            <person name="Piard J."/>
            <person name="Aftimos S."/>
            <person name="Mancini G."/>
            <person name="Dias P."/>
            <person name="Philip N."/>
            <person name="Goldenberg A."/>
            <person name="Le Merrer M."/>
            <person name="Rio M."/>
            <person name="Josifova D."/>
            <person name="Van Hagen J.M."/>
            <person name="Lacombe D."/>
            <person name="Edery P."/>
            <person name="Dupuis-Girod S."/>
            <person name="Putoux A."/>
            <person name="Sanlaville D."/>
            <person name="Fischer R."/>
            <person name="Drevillon L."/>
            <person name="Briand-Suleau A."/>
            <person name="Metay C."/>
            <person name="Goossens M."/>
            <person name="Amiel J."/>
            <person name="Jacquette A."/>
            <person name="Giurgea I."/>
        </authorList>
    </citation>
    <scope>VARIANTS PTHS TRP-565; GLY-572; GLN-572; HIS-574; PRO-574; TRP-576; GLN-576; PRO-578; PRO-583 AND VAL-610</scope>
</reference>
<reference key="27">
    <citation type="journal article" date="2014" name="PLoS Genet.">
        <title>De novo mutations in moderate or severe intellectual disability.</title>
        <authorList>
            <person name="Hamdan F.F."/>
            <person name="Srour M."/>
            <person name="Capo-Chichi J.M."/>
            <person name="Daoud H."/>
            <person name="Nassif C."/>
            <person name="Patry L."/>
            <person name="Massicotte C."/>
            <person name="Ambalavanan A."/>
            <person name="Spiegelman D."/>
            <person name="Diallo O."/>
            <person name="Henrion E."/>
            <person name="Dionne-Laporte A."/>
            <person name="Fougerat A."/>
            <person name="Pshezhetsky A.V."/>
            <person name="Venkateswaran S."/>
            <person name="Rouleau G.A."/>
            <person name="Michaud J.L."/>
        </authorList>
    </citation>
    <scope>VARIANT PTHS 385-ARG--MET-667 DEL</scope>
</reference>
<gene>
    <name type="primary">TCF4</name>
    <name type="synonym">BHLHB19</name>
    <name type="synonym">ITF2</name>
    <name type="synonym">SEF2</name>
</gene>
<dbReference type="EMBL" id="M74718">
    <property type="protein sequence ID" value="AAA60310.1"/>
    <property type="status" value="ALT_SEQ"/>
    <property type="molecule type" value="mRNA"/>
</dbReference>
<dbReference type="EMBL" id="M74719">
    <property type="protein sequence ID" value="AAA60311.1"/>
    <property type="molecule type" value="mRNA"/>
</dbReference>
<dbReference type="EMBL" id="M74720">
    <property type="protein sequence ID" value="AAA60312.1"/>
    <property type="status" value="ALT_SEQ"/>
    <property type="molecule type" value="mRNA"/>
</dbReference>
<dbReference type="EMBL" id="FR748210">
    <property type="protein sequence ID" value="CBY80189.1"/>
    <property type="molecule type" value="mRNA"/>
</dbReference>
<dbReference type="EMBL" id="FR748211">
    <property type="protein sequence ID" value="CBY80190.1"/>
    <property type="molecule type" value="mRNA"/>
</dbReference>
<dbReference type="EMBL" id="FR748212">
    <property type="protein sequence ID" value="CBY80191.1"/>
    <property type="molecule type" value="mRNA"/>
</dbReference>
<dbReference type="EMBL" id="FR748213">
    <property type="protein sequence ID" value="CBY80192.1"/>
    <property type="molecule type" value="mRNA"/>
</dbReference>
<dbReference type="EMBL" id="FR748214">
    <property type="protein sequence ID" value="CBY80193.1"/>
    <property type="molecule type" value="mRNA"/>
</dbReference>
<dbReference type="EMBL" id="FR748215">
    <property type="protein sequence ID" value="CBY80194.1"/>
    <property type="molecule type" value="mRNA"/>
</dbReference>
<dbReference type="EMBL" id="FR748216">
    <property type="protein sequence ID" value="CBY80195.1"/>
    <property type="molecule type" value="mRNA"/>
</dbReference>
<dbReference type="EMBL" id="FR748217">
    <property type="protein sequence ID" value="CBY80196.1"/>
    <property type="molecule type" value="mRNA"/>
</dbReference>
<dbReference type="EMBL" id="FR748218">
    <property type="protein sequence ID" value="CBY80197.1"/>
    <property type="molecule type" value="mRNA"/>
</dbReference>
<dbReference type="EMBL" id="FR748219">
    <property type="protein sequence ID" value="CBY80198.1"/>
    <property type="molecule type" value="mRNA"/>
</dbReference>
<dbReference type="EMBL" id="FR748220">
    <property type="protein sequence ID" value="CBY80199.1"/>
    <property type="molecule type" value="mRNA"/>
</dbReference>
<dbReference type="EMBL" id="FR748221">
    <property type="protein sequence ID" value="CBY80200.1"/>
    <property type="molecule type" value="mRNA"/>
</dbReference>
<dbReference type="EMBL" id="FR748222">
    <property type="protein sequence ID" value="CBY80201.1"/>
    <property type="molecule type" value="mRNA"/>
</dbReference>
<dbReference type="EMBL" id="FR748223">
    <property type="protein sequence ID" value="CBY80202.1"/>
    <property type="molecule type" value="mRNA"/>
</dbReference>
<dbReference type="EMBL" id="AK095041">
    <property type="protein sequence ID" value="BAG52974.1"/>
    <property type="molecule type" value="mRNA"/>
</dbReference>
<dbReference type="EMBL" id="AK096862">
    <property type="protein sequence ID" value="BAG53382.1"/>
    <property type="molecule type" value="mRNA"/>
</dbReference>
<dbReference type="EMBL" id="AK299169">
    <property type="protein sequence ID" value="BAH12962.1"/>
    <property type="molecule type" value="mRNA"/>
</dbReference>
<dbReference type="EMBL" id="AK300636">
    <property type="protein sequence ID" value="BAG62325.1"/>
    <property type="molecule type" value="mRNA"/>
</dbReference>
<dbReference type="EMBL" id="AK300038">
    <property type="protein sequence ID" value="BAG61849.1"/>
    <property type="molecule type" value="mRNA"/>
</dbReference>
<dbReference type="EMBL" id="AK301144">
    <property type="protein sequence ID" value="BAH13417.1"/>
    <property type="molecule type" value="mRNA"/>
</dbReference>
<dbReference type="EMBL" id="AK300612">
    <property type="protein sequence ID" value="BAH13314.1"/>
    <property type="molecule type" value="mRNA"/>
</dbReference>
<dbReference type="EMBL" id="AK316165">
    <property type="protein sequence ID" value="BAH14536.1"/>
    <property type="molecule type" value="mRNA"/>
</dbReference>
<dbReference type="EMBL" id="AC013587">
    <property type="status" value="NOT_ANNOTATED_CDS"/>
    <property type="molecule type" value="Genomic_DNA"/>
</dbReference>
<dbReference type="EMBL" id="AC018994">
    <property type="status" value="NOT_ANNOTATED_CDS"/>
    <property type="molecule type" value="Genomic_DNA"/>
</dbReference>
<dbReference type="EMBL" id="AC090383">
    <property type="status" value="NOT_ANNOTATED_CDS"/>
    <property type="molecule type" value="Genomic_DNA"/>
</dbReference>
<dbReference type="EMBL" id="AC090684">
    <property type="status" value="NOT_ANNOTATED_CDS"/>
    <property type="molecule type" value="Genomic_DNA"/>
</dbReference>
<dbReference type="EMBL" id="AC091103">
    <property type="status" value="NOT_ANNOTATED_CDS"/>
    <property type="molecule type" value="Genomic_DNA"/>
</dbReference>
<dbReference type="EMBL" id="CH471096">
    <property type="protein sequence ID" value="EAW63017.1"/>
    <property type="molecule type" value="Genomic_DNA"/>
</dbReference>
<dbReference type="EMBL" id="CH471096">
    <property type="protein sequence ID" value="EAW63018.1"/>
    <property type="molecule type" value="Genomic_DNA"/>
</dbReference>
<dbReference type="EMBL" id="BC125084">
    <property type="protein sequence ID" value="AAI25085.1"/>
    <property type="molecule type" value="mRNA"/>
</dbReference>
<dbReference type="EMBL" id="BC125085">
    <property type="protein sequence ID" value="AAI25086.1"/>
    <property type="molecule type" value="mRNA"/>
</dbReference>
<dbReference type="EMBL" id="AV761952">
    <property type="status" value="NOT_ANNOTATED_CDS"/>
    <property type="molecule type" value="mRNA"/>
</dbReference>
<dbReference type="EMBL" id="U75701">
    <property type="protein sequence ID" value="AAC51824.1"/>
    <property type="molecule type" value="Genomic_DNA"/>
</dbReference>
<dbReference type="EMBL" id="X52079">
    <property type="protein sequence ID" value="CAA36298.1"/>
    <property type="molecule type" value="mRNA"/>
</dbReference>
<dbReference type="CCDS" id="CCDS11960.1">
    <molecule id="P15884-1"/>
</dbReference>
<dbReference type="CCDS" id="CCDS42438.1">
    <molecule id="P15884-3"/>
</dbReference>
<dbReference type="CCDS" id="CCDS58623.1">
    <molecule id="P15884-8"/>
</dbReference>
<dbReference type="CCDS" id="CCDS58624.1">
    <molecule id="P15884-2"/>
</dbReference>
<dbReference type="CCDS" id="CCDS58625.1">
    <molecule id="P15884-6"/>
</dbReference>
<dbReference type="CCDS" id="CCDS58626.1">
    <molecule id="P15884-9"/>
</dbReference>
<dbReference type="CCDS" id="CCDS58627.1">
    <molecule id="P15884-11"/>
</dbReference>
<dbReference type="CCDS" id="CCDS58628.1">
    <molecule id="P15884-10"/>
</dbReference>
<dbReference type="CCDS" id="CCDS58629.1">
    <molecule id="P15884-13"/>
</dbReference>
<dbReference type="CCDS" id="CCDS59321.1">
    <molecule id="P15884-12"/>
</dbReference>
<dbReference type="CCDS" id="CCDS77191.1">
    <molecule id="P15884-7"/>
</dbReference>
<dbReference type="CCDS" id="CCDS77192.1">
    <molecule id="P15884-14"/>
</dbReference>
<dbReference type="PIR" id="A41311">
    <property type="entry name" value="A41311"/>
</dbReference>
<dbReference type="RefSeq" id="NP_001077431.1">
    <molecule id="P15884-3"/>
    <property type="nucleotide sequence ID" value="NM_001083962.2"/>
</dbReference>
<dbReference type="RefSeq" id="NP_001230155.2">
    <property type="nucleotide sequence ID" value="NM_001243226.2"/>
</dbReference>
<dbReference type="RefSeq" id="NP_001230156.1">
    <molecule id="P15884-13"/>
    <property type="nucleotide sequence ID" value="NM_001243227.2"/>
</dbReference>
<dbReference type="RefSeq" id="NP_001230157.1">
    <property type="nucleotide sequence ID" value="NM_001243228.1"/>
</dbReference>
<dbReference type="RefSeq" id="NP_001230159.1">
    <molecule id="P15884-12"/>
    <property type="nucleotide sequence ID" value="NM_001243230.2"/>
</dbReference>
<dbReference type="RefSeq" id="NP_001230160.1">
    <molecule id="P15884-10"/>
    <property type="nucleotide sequence ID" value="NM_001243231.2"/>
</dbReference>
<dbReference type="RefSeq" id="NP_001230161.1">
    <molecule id="P15884-11"/>
    <property type="nucleotide sequence ID" value="NM_001243232.1"/>
</dbReference>
<dbReference type="RefSeq" id="NP_001230162.1">
    <molecule id="P15884-9"/>
    <property type="nucleotide sequence ID" value="NM_001243233.2"/>
</dbReference>
<dbReference type="RefSeq" id="NP_001230163.1">
    <molecule id="P15884-2"/>
    <property type="nucleotide sequence ID" value="NM_001243234.2"/>
</dbReference>
<dbReference type="RefSeq" id="NP_001230164.1">
    <molecule id="P15884-6"/>
    <property type="nucleotide sequence ID" value="NM_001243235.2"/>
</dbReference>
<dbReference type="RefSeq" id="NP_001230165.1">
    <molecule id="P15884-8"/>
    <property type="nucleotide sequence ID" value="NM_001243236.2"/>
</dbReference>
<dbReference type="RefSeq" id="NP_001293136.1">
    <molecule id="P15884-14"/>
    <property type="nucleotide sequence ID" value="NM_001306207.1"/>
</dbReference>
<dbReference type="RefSeq" id="NP_001293137.1">
    <molecule id="P15884-7"/>
    <property type="nucleotide sequence ID" value="NM_001306208.1"/>
</dbReference>
<dbReference type="RefSeq" id="NP_001335140.1">
    <property type="nucleotide sequence ID" value="NM_001348211.1"/>
</dbReference>
<dbReference type="RefSeq" id="NP_001335141.1">
    <molecule id="P15884-9"/>
    <property type="nucleotide sequence ID" value="NM_001348212.2"/>
</dbReference>
<dbReference type="RefSeq" id="NP_001335142.1">
    <property type="nucleotide sequence ID" value="NM_001348213.1"/>
</dbReference>
<dbReference type="RefSeq" id="NP_001335143.1">
    <property type="nucleotide sequence ID" value="NM_001348214.1"/>
</dbReference>
<dbReference type="RefSeq" id="NP_001335144.1">
    <property type="nucleotide sequence ID" value="NM_001348215.1"/>
</dbReference>
<dbReference type="RefSeq" id="NP_001335145.1">
    <property type="nucleotide sequence ID" value="NM_001348216.1"/>
</dbReference>
<dbReference type="RefSeq" id="NP_001335146.1">
    <molecule id="P15884-13"/>
    <property type="nucleotide sequence ID" value="NM_001348217.1"/>
</dbReference>
<dbReference type="RefSeq" id="NP_001335147.1">
    <molecule id="P15884-13"/>
    <property type="nucleotide sequence ID" value="NM_001348218.2"/>
</dbReference>
<dbReference type="RefSeq" id="NP_001335148.1">
    <molecule id="P15884-14"/>
    <property type="nucleotide sequence ID" value="NM_001348219.2"/>
</dbReference>
<dbReference type="RefSeq" id="NP_001335149.1">
    <property type="nucleotide sequence ID" value="NM_001348220.1"/>
</dbReference>
<dbReference type="RefSeq" id="NP_001356496.1">
    <molecule id="P15884-3"/>
    <property type="nucleotide sequence ID" value="NM_001369567.1"/>
</dbReference>
<dbReference type="RefSeq" id="NP_001356497.1">
    <molecule id="P15884-3"/>
    <property type="nucleotide sequence ID" value="NM_001369568.1"/>
</dbReference>
<dbReference type="RefSeq" id="NP_001356500.1">
    <molecule id="P15884-1"/>
    <property type="nucleotide sequence ID" value="NM_001369571.1"/>
</dbReference>
<dbReference type="RefSeq" id="NP_001356501.1">
    <molecule id="P15884-1"/>
    <property type="nucleotide sequence ID" value="NM_001369572.1"/>
</dbReference>
<dbReference type="RefSeq" id="NP_001356504.1">
    <molecule id="P15884-13"/>
    <property type="nucleotide sequence ID" value="NM_001369575.1"/>
</dbReference>
<dbReference type="RefSeq" id="NP_001356511.1">
    <molecule id="P15884-14"/>
    <property type="nucleotide sequence ID" value="NM_001369582.1"/>
</dbReference>
<dbReference type="RefSeq" id="NP_001356512.1">
    <molecule id="P15884-14"/>
    <property type="nucleotide sequence ID" value="NM_001369583.1"/>
</dbReference>
<dbReference type="RefSeq" id="NP_003190.1">
    <molecule id="P15884-1"/>
    <property type="nucleotide sequence ID" value="NM_003199.3"/>
</dbReference>
<dbReference type="RefSeq" id="XP_005266796.2">
    <property type="nucleotide sequence ID" value="XM_005266739.3"/>
</dbReference>
<dbReference type="RefSeq" id="XP_006722599.1">
    <property type="nucleotide sequence ID" value="XM_006722536.2"/>
</dbReference>
<dbReference type="RefSeq" id="XP_006722600.1">
    <property type="nucleotide sequence ID" value="XM_006722537.2"/>
</dbReference>
<dbReference type="RefSeq" id="XP_016881425.1">
    <property type="nucleotide sequence ID" value="XM_017025936.1"/>
</dbReference>
<dbReference type="RefSeq" id="XP_016881429.1">
    <property type="nucleotide sequence ID" value="XM_017025940.1"/>
</dbReference>
<dbReference type="RefSeq" id="XP_016881430.1">
    <property type="nucleotide sequence ID" value="XM_017025941.1"/>
</dbReference>
<dbReference type="RefSeq" id="XP_016881435.1">
    <property type="nucleotide sequence ID" value="XM_017025946.1"/>
</dbReference>
<dbReference type="RefSeq" id="XP_016881445.1">
    <property type="nucleotide sequence ID" value="XM_017025956.1"/>
</dbReference>
<dbReference type="PDB" id="2KWF">
    <property type="method" value="NMR"/>
    <property type="chains" value="B=11-27"/>
</dbReference>
<dbReference type="PDB" id="6OD3">
    <property type="method" value="X-ray"/>
    <property type="resolution" value="1.49 A"/>
    <property type="chains" value="A/B/E/F/G/H/I/J=565-624"/>
</dbReference>
<dbReference type="PDB" id="6OD4">
    <property type="method" value="X-ray"/>
    <property type="resolution" value="1.70 A"/>
    <property type="chains" value="A/B/G/H=565-624"/>
</dbReference>
<dbReference type="PDB" id="6OD5">
    <property type="method" value="X-ray"/>
    <property type="resolution" value="2.05 A"/>
    <property type="chains" value="A/B/C/D=565-624"/>
</dbReference>
<dbReference type="PDB" id="8OSB">
    <property type="method" value="X-ray"/>
    <property type="resolution" value="2.90 A"/>
    <property type="chains" value="A=565-624"/>
</dbReference>
<dbReference type="PDBsum" id="2KWF"/>
<dbReference type="PDBsum" id="6OD3"/>
<dbReference type="PDBsum" id="6OD4"/>
<dbReference type="PDBsum" id="6OD5"/>
<dbReference type="PDBsum" id="8OSB"/>
<dbReference type="BMRB" id="P15884"/>
<dbReference type="SMR" id="P15884"/>
<dbReference type="BioGRID" id="112787">
    <property type="interactions" value="297"/>
</dbReference>
<dbReference type="CORUM" id="P15884"/>
<dbReference type="DIP" id="DIP-163N"/>
<dbReference type="FunCoup" id="P15884">
    <property type="interactions" value="1596"/>
</dbReference>
<dbReference type="IntAct" id="P15884">
    <property type="interactions" value="305"/>
</dbReference>
<dbReference type="MINT" id="P15884"/>
<dbReference type="STRING" id="9606.ENSP00000381382"/>
<dbReference type="BindingDB" id="P15884"/>
<dbReference type="ChEMBL" id="CHEMBL3885541"/>
<dbReference type="GlyConnect" id="2086">
    <property type="glycosylation" value="1 N-Linked glycan (1 site)"/>
</dbReference>
<dbReference type="GlyCosmos" id="P15884">
    <property type="glycosylation" value="1 site, 2 glycans"/>
</dbReference>
<dbReference type="GlyGen" id="P15884">
    <property type="glycosylation" value="2 sites, 3 N-linked glycans (1 site), 1 O-linked glycan (1 site)"/>
</dbReference>
<dbReference type="iPTMnet" id="P15884"/>
<dbReference type="PhosphoSitePlus" id="P15884"/>
<dbReference type="BioMuta" id="TCF4"/>
<dbReference type="jPOST" id="P15884"/>
<dbReference type="MassIVE" id="P15884"/>
<dbReference type="PaxDb" id="9606-ENSP00000381382"/>
<dbReference type="PeptideAtlas" id="P15884"/>
<dbReference type="ProteomicsDB" id="32164"/>
<dbReference type="ProteomicsDB" id="32165"/>
<dbReference type="ProteomicsDB" id="32166"/>
<dbReference type="ProteomicsDB" id="32167"/>
<dbReference type="ProteomicsDB" id="32168"/>
<dbReference type="ProteomicsDB" id="3668"/>
<dbReference type="ProteomicsDB" id="3707"/>
<dbReference type="ProteomicsDB" id="41559"/>
<dbReference type="ProteomicsDB" id="5186"/>
<dbReference type="ProteomicsDB" id="53237">
    <molecule id="P15884-1"/>
</dbReference>
<dbReference type="ProteomicsDB" id="53238">
    <molecule id="P15884-2"/>
</dbReference>
<dbReference type="ProteomicsDB" id="53239">
    <molecule id="P15884-3"/>
</dbReference>
<dbReference type="ProteomicsDB" id="6700"/>
<dbReference type="ProteomicsDB" id="6818"/>
<dbReference type="Pumba" id="P15884"/>
<dbReference type="Antibodypedia" id="9596">
    <property type="antibodies" value="411 antibodies from 34 providers"/>
</dbReference>
<dbReference type="DNASU" id="6925"/>
<dbReference type="Ensembl" id="ENST00000354452.8">
    <molecule id="P15884-3"/>
    <property type="protein sequence ID" value="ENSP00000346440.3"/>
    <property type="gene ID" value="ENSG00000196628.20"/>
</dbReference>
<dbReference type="Ensembl" id="ENST00000356073.8">
    <molecule id="P15884-1"/>
    <property type="protein sequence ID" value="ENSP00000348374.4"/>
    <property type="gene ID" value="ENSG00000196628.20"/>
</dbReference>
<dbReference type="Ensembl" id="ENST00000457482.7">
    <molecule id="P15884-2"/>
    <property type="protein sequence ID" value="ENSP00000409447.2"/>
    <property type="gene ID" value="ENSG00000196628.20"/>
</dbReference>
<dbReference type="Ensembl" id="ENST00000537578.5">
    <molecule id="P15884-13"/>
    <property type="protein sequence ID" value="ENSP00000440731.1"/>
    <property type="gene ID" value="ENSG00000196628.20"/>
</dbReference>
<dbReference type="Ensembl" id="ENST00000537856.7">
    <molecule id="P15884-9"/>
    <property type="protein sequence ID" value="ENSP00000439827.2"/>
    <property type="gene ID" value="ENSG00000196628.20"/>
</dbReference>
<dbReference type="Ensembl" id="ENST00000540999.5">
    <molecule id="P15884-14"/>
    <property type="protein sequence ID" value="ENSP00000445202.1"/>
    <property type="gene ID" value="ENSG00000196628.20"/>
</dbReference>
<dbReference type="Ensembl" id="ENST00000543082.5">
    <molecule id="P15884-10"/>
    <property type="protein sequence ID" value="ENSP00000439656.1"/>
    <property type="gene ID" value="ENSG00000196628.20"/>
</dbReference>
<dbReference type="Ensembl" id="ENST00000544241.6">
    <molecule id="P15884-11"/>
    <property type="protein sequence ID" value="ENSP00000441562.2"/>
    <property type="gene ID" value="ENSG00000196628.20"/>
</dbReference>
<dbReference type="Ensembl" id="ENST00000561831.7">
    <molecule id="P15884-8"/>
    <property type="protein sequence ID" value="ENSP00000457765.1"/>
    <property type="gene ID" value="ENSG00000196628.20"/>
</dbReference>
<dbReference type="Ensembl" id="ENST00000561992.5">
    <molecule id="P15884-9"/>
    <property type="protein sequence ID" value="ENSP00000455179.1"/>
    <property type="gene ID" value="ENSG00000196628.20"/>
</dbReference>
<dbReference type="Ensembl" id="ENST00000564228.5">
    <molecule id="P15884-7"/>
    <property type="protein sequence ID" value="ENSP00000455261.1"/>
    <property type="gene ID" value="ENSG00000196628.20"/>
</dbReference>
<dbReference type="Ensembl" id="ENST00000564999.5">
    <molecule id="P15884-1"/>
    <property type="protein sequence ID" value="ENSP00000457649.1"/>
    <property type="gene ID" value="ENSG00000196628.20"/>
</dbReference>
<dbReference type="Ensembl" id="ENST00000565018.6">
    <molecule id="P15884-15"/>
    <property type="protein sequence ID" value="ENSP00000455984.2"/>
    <property type="gene ID" value="ENSG00000196628.20"/>
</dbReference>
<dbReference type="Ensembl" id="ENST00000566279.5">
    <molecule id="P15884-4"/>
    <property type="protein sequence ID" value="ENSP00000456125.1"/>
    <property type="gene ID" value="ENSG00000196628.20"/>
</dbReference>
<dbReference type="Ensembl" id="ENST00000566286.5">
    <molecule id="P15884-12"/>
    <property type="protein sequence ID" value="ENSP00000455418.2"/>
    <property type="gene ID" value="ENSG00000196628.20"/>
</dbReference>
<dbReference type="Ensembl" id="ENST00000567880.5">
    <molecule id="P15884-5"/>
    <property type="protein sequence ID" value="ENSP00000454366.1"/>
    <property type="gene ID" value="ENSG00000196628.20"/>
</dbReference>
<dbReference type="Ensembl" id="ENST00000568673.5">
    <molecule id="P15884-13"/>
    <property type="protein sequence ID" value="ENSP00000455135.1"/>
    <property type="gene ID" value="ENSG00000196628.20"/>
</dbReference>
<dbReference type="Ensembl" id="ENST00000570177.6">
    <molecule id="P15884-9"/>
    <property type="protein sequence ID" value="ENSP00000454647.1"/>
    <property type="gene ID" value="ENSG00000196628.20"/>
</dbReference>
<dbReference type="Ensembl" id="ENST00000570287.6">
    <molecule id="P15884-6"/>
    <property type="protein sequence ID" value="ENSP00000455763.1"/>
    <property type="gene ID" value="ENSG00000196628.20"/>
</dbReference>
<dbReference type="Ensembl" id="ENST00000616053.4">
    <molecule id="P15884-15"/>
    <property type="protein sequence ID" value="ENSP00000478549.1"/>
    <property type="gene ID" value="ENSG00000196628.20"/>
</dbReference>
<dbReference type="Ensembl" id="ENST00000626584.2">
    <molecule id="P15884-16"/>
    <property type="protein sequence ID" value="ENSP00000486072.1"/>
    <property type="gene ID" value="ENSG00000196628.20"/>
</dbReference>
<dbReference type="Ensembl" id="ENST00000629387.2">
    <molecule id="P15884-3"/>
    <property type="protein sequence ID" value="ENSP00000486670.1"/>
    <property type="gene ID" value="ENSG00000196628.20"/>
</dbReference>
<dbReference type="Ensembl" id="ENST00000636400.2">
    <molecule id="P15884-13"/>
    <property type="protein sequence ID" value="ENSP00000490006.1"/>
    <property type="gene ID" value="ENSG00000196628.20"/>
</dbReference>
<dbReference type="GeneID" id="6925"/>
<dbReference type="KEGG" id="hsa:6925"/>
<dbReference type="MANE-Select" id="ENST00000354452.8">
    <molecule id="P15884-3"/>
    <property type="protein sequence ID" value="ENSP00000346440.3"/>
    <property type="RefSeq nucleotide sequence ID" value="NM_001083962.2"/>
    <property type="RefSeq protein sequence ID" value="NP_001077431.1"/>
</dbReference>
<dbReference type="UCSC" id="uc002lfw.5">
    <molecule id="P15884-1"/>
    <property type="organism name" value="human"/>
</dbReference>
<dbReference type="AGR" id="HGNC:11634"/>
<dbReference type="CTD" id="6925"/>
<dbReference type="DisGeNET" id="6925"/>
<dbReference type="GeneCards" id="TCF4"/>
<dbReference type="GeneReviews" id="TCF4"/>
<dbReference type="HGNC" id="HGNC:11634">
    <property type="gene designation" value="TCF4"/>
</dbReference>
<dbReference type="HPA" id="ENSG00000196628">
    <property type="expression patterns" value="Low tissue specificity"/>
</dbReference>
<dbReference type="MalaCards" id="TCF4"/>
<dbReference type="MIM" id="602272">
    <property type="type" value="gene"/>
</dbReference>
<dbReference type="MIM" id="610954">
    <property type="type" value="phenotype"/>
</dbReference>
<dbReference type="MIM" id="613267">
    <property type="type" value="phenotype"/>
</dbReference>
<dbReference type="neXtProt" id="NX_P15884"/>
<dbReference type="OpenTargets" id="ENSG00000196628"/>
<dbReference type="Orphanet" id="178469">
    <property type="disease" value="Autosomal dominant non-syndromic intellectual disability"/>
</dbReference>
<dbReference type="Orphanet" id="98974">
    <property type="disease" value="Fuchs endothelial corneal dystrophy"/>
</dbReference>
<dbReference type="Orphanet" id="2896">
    <property type="disease" value="Pitt-Hopkins syndrome"/>
</dbReference>
<dbReference type="Orphanet" id="171">
    <property type="disease" value="Primary sclerosing cholangitis"/>
</dbReference>
<dbReference type="PharmGKB" id="PA164742621"/>
<dbReference type="VEuPathDB" id="HostDB:ENSG00000196628"/>
<dbReference type="eggNOG" id="KOG3910">
    <property type="taxonomic scope" value="Eukaryota"/>
</dbReference>
<dbReference type="GeneTree" id="ENSGT00940000159129"/>
<dbReference type="InParanoid" id="P15884"/>
<dbReference type="OrthoDB" id="10034090at2759"/>
<dbReference type="PAN-GO" id="P15884">
    <property type="GO annotations" value="4 GO annotations based on evolutionary models"/>
</dbReference>
<dbReference type="PhylomeDB" id="P15884"/>
<dbReference type="TreeFam" id="TF321672"/>
<dbReference type="BRENDA" id="7.6.2.3">
    <property type="organism ID" value="2681"/>
</dbReference>
<dbReference type="PathwayCommons" id="P15884"/>
<dbReference type="Reactome" id="R-HSA-525793">
    <property type="pathway name" value="Myogenesis"/>
</dbReference>
<dbReference type="Reactome" id="R-HSA-9839394">
    <property type="pathway name" value="TGFBR3 expression"/>
</dbReference>
<dbReference type="SignaLink" id="P15884"/>
<dbReference type="SIGNOR" id="P15884"/>
<dbReference type="BioGRID-ORCS" id="6925">
    <property type="hits" value="23 hits in 1186 CRISPR screens"/>
</dbReference>
<dbReference type="ChiTaRS" id="TCF4">
    <property type="organism name" value="human"/>
</dbReference>
<dbReference type="GeneWiki" id="TCF4"/>
<dbReference type="GenomeRNAi" id="6925"/>
<dbReference type="Pharos" id="P15884">
    <property type="development level" value="Tbio"/>
</dbReference>
<dbReference type="PRO" id="PR:P15884"/>
<dbReference type="Proteomes" id="UP000005640">
    <property type="component" value="Chromosome 18"/>
</dbReference>
<dbReference type="RNAct" id="P15884">
    <property type="molecule type" value="protein"/>
</dbReference>
<dbReference type="Bgee" id="ENSG00000196628">
    <property type="expression patterns" value="Expressed in endothelial cell and 214 other cell types or tissues"/>
</dbReference>
<dbReference type="ExpressionAtlas" id="P15884">
    <property type="expression patterns" value="baseline and differential"/>
</dbReference>
<dbReference type="GO" id="GO:1990907">
    <property type="term" value="C:beta-catenin-TCF complex"/>
    <property type="evidence" value="ECO:0000353"/>
    <property type="project" value="FlyBase"/>
</dbReference>
<dbReference type="GO" id="GO:0070369">
    <property type="term" value="C:beta-catenin-TCF7L2 complex"/>
    <property type="evidence" value="ECO:0000314"/>
    <property type="project" value="UniProtKB"/>
</dbReference>
<dbReference type="GO" id="GO:0000785">
    <property type="term" value="C:chromatin"/>
    <property type="evidence" value="ECO:0000314"/>
    <property type="project" value="ARUK-UCL"/>
</dbReference>
<dbReference type="GO" id="GO:0005634">
    <property type="term" value="C:nucleus"/>
    <property type="evidence" value="ECO:0000314"/>
    <property type="project" value="UniProtKB"/>
</dbReference>
<dbReference type="GO" id="GO:0005667">
    <property type="term" value="C:transcription regulator complex"/>
    <property type="evidence" value="ECO:0000250"/>
    <property type="project" value="BHF-UCL"/>
</dbReference>
<dbReference type="GO" id="GO:0008013">
    <property type="term" value="F:beta-catenin binding"/>
    <property type="evidence" value="ECO:0000353"/>
    <property type="project" value="UniProtKB"/>
</dbReference>
<dbReference type="GO" id="GO:0003677">
    <property type="term" value="F:DNA binding"/>
    <property type="evidence" value="ECO:0000314"/>
    <property type="project" value="UniProtKB"/>
</dbReference>
<dbReference type="GO" id="GO:0001228">
    <property type="term" value="F:DNA-binding transcription activator activity, RNA polymerase II-specific"/>
    <property type="evidence" value="ECO:0000250"/>
    <property type="project" value="BHF-UCL"/>
</dbReference>
<dbReference type="GO" id="GO:0003700">
    <property type="term" value="F:DNA-binding transcription factor activity"/>
    <property type="evidence" value="ECO:0000314"/>
    <property type="project" value="UniProtKB"/>
</dbReference>
<dbReference type="GO" id="GO:0000981">
    <property type="term" value="F:DNA-binding transcription factor activity, RNA polymerase II-specific"/>
    <property type="evidence" value="ECO:0000250"/>
    <property type="project" value="BHF-UCL"/>
</dbReference>
<dbReference type="GO" id="GO:0070888">
    <property type="term" value="F:E-box binding"/>
    <property type="evidence" value="ECO:0000250"/>
    <property type="project" value="UniProtKB"/>
</dbReference>
<dbReference type="GO" id="GO:0042802">
    <property type="term" value="F:identical protein binding"/>
    <property type="evidence" value="ECO:0000353"/>
    <property type="project" value="IntAct"/>
</dbReference>
<dbReference type="GO" id="GO:0046982">
    <property type="term" value="F:protein heterodimerization activity"/>
    <property type="evidence" value="ECO:0000250"/>
    <property type="project" value="UniProtKB"/>
</dbReference>
<dbReference type="GO" id="GO:0000978">
    <property type="term" value="F:RNA polymerase II cis-regulatory region sequence-specific DNA binding"/>
    <property type="evidence" value="ECO:0000314"/>
    <property type="project" value="UniProtKB"/>
</dbReference>
<dbReference type="GO" id="GO:1990837">
    <property type="term" value="F:sequence-specific double-stranded DNA binding"/>
    <property type="evidence" value="ECO:0000314"/>
    <property type="project" value="ARUK-UCL"/>
</dbReference>
<dbReference type="GO" id="GO:0001093">
    <property type="term" value="F:TFIIB-class transcription factor binding"/>
    <property type="evidence" value="ECO:0000250"/>
    <property type="project" value="BHF-UCL"/>
</dbReference>
<dbReference type="GO" id="GO:0030154">
    <property type="term" value="P:cell differentiation"/>
    <property type="evidence" value="ECO:0007669"/>
    <property type="project" value="UniProtKB-KW"/>
</dbReference>
<dbReference type="GO" id="GO:0007399">
    <property type="term" value="P:nervous system development"/>
    <property type="evidence" value="ECO:0007669"/>
    <property type="project" value="UniProtKB-KW"/>
</dbReference>
<dbReference type="GO" id="GO:0045893">
    <property type="term" value="P:positive regulation of DNA-templated transcription"/>
    <property type="evidence" value="ECO:0000314"/>
    <property type="project" value="UniProtKB"/>
</dbReference>
<dbReference type="GO" id="GO:0045666">
    <property type="term" value="P:positive regulation of neuron differentiation"/>
    <property type="evidence" value="ECO:0000250"/>
    <property type="project" value="UniProtKB"/>
</dbReference>
<dbReference type="GO" id="GO:0045944">
    <property type="term" value="P:positive regulation of transcription by RNA polymerase II"/>
    <property type="evidence" value="ECO:0000250"/>
    <property type="project" value="BHF-UCL"/>
</dbReference>
<dbReference type="GO" id="GO:0065004">
    <property type="term" value="P:protein-DNA complex assembly"/>
    <property type="evidence" value="ECO:0000250"/>
    <property type="project" value="BHF-UCL"/>
</dbReference>
<dbReference type="GO" id="GO:0006357">
    <property type="term" value="P:regulation of transcription by RNA polymerase II"/>
    <property type="evidence" value="ECO:0000318"/>
    <property type="project" value="GO_Central"/>
</dbReference>
<dbReference type="CDD" id="cd18945">
    <property type="entry name" value="bHLH_E-protein_TCF4_E2-2"/>
    <property type="match status" value="1"/>
</dbReference>
<dbReference type="FunFam" id="4.10.280.10:FF:000001">
    <property type="entry name" value="Putative transcription factor 12"/>
    <property type="match status" value="1"/>
</dbReference>
<dbReference type="Gene3D" id="4.10.280.10">
    <property type="entry name" value="Helix-loop-helix DNA-binding domain"/>
    <property type="match status" value="1"/>
</dbReference>
<dbReference type="IDEAL" id="IID00622"/>
<dbReference type="InterPro" id="IPR011598">
    <property type="entry name" value="bHLH_dom"/>
</dbReference>
<dbReference type="InterPro" id="IPR036638">
    <property type="entry name" value="HLH_DNA-bd_sf"/>
</dbReference>
<dbReference type="InterPro" id="IPR051098">
    <property type="entry name" value="NeuroDiff_E-box_TFs"/>
</dbReference>
<dbReference type="PANTHER" id="PTHR11793">
    <property type="entry name" value="BASIC HELIX-LOOP-HELIX TRANSCRIPTION FACTOR"/>
    <property type="match status" value="1"/>
</dbReference>
<dbReference type="PANTHER" id="PTHR11793:SF10">
    <property type="entry name" value="TRANSCRIPTION FACTOR 4"/>
    <property type="match status" value="1"/>
</dbReference>
<dbReference type="Pfam" id="PF00010">
    <property type="entry name" value="HLH"/>
    <property type="match status" value="1"/>
</dbReference>
<dbReference type="SMART" id="SM00353">
    <property type="entry name" value="HLH"/>
    <property type="match status" value="1"/>
</dbReference>
<dbReference type="SUPFAM" id="SSF47459">
    <property type="entry name" value="HLH, helix-loop-helix DNA-binding domain"/>
    <property type="match status" value="1"/>
</dbReference>
<dbReference type="PROSITE" id="PS50888">
    <property type="entry name" value="BHLH"/>
    <property type="match status" value="1"/>
</dbReference>
<keyword id="KW-0002">3D-structure</keyword>
<keyword id="KW-0010">Activator</keyword>
<keyword id="KW-0025">Alternative splicing</keyword>
<keyword id="KW-1212">Corneal dystrophy</keyword>
<keyword id="KW-0221">Differentiation</keyword>
<keyword id="KW-0225">Disease variant</keyword>
<keyword id="KW-0238">DNA-binding</keyword>
<keyword id="KW-0887">Epilepsy</keyword>
<keyword id="KW-0991">Intellectual disability</keyword>
<keyword id="KW-0524">Neurogenesis</keyword>
<keyword id="KW-0539">Nucleus</keyword>
<keyword id="KW-0597">Phosphoprotein</keyword>
<keyword id="KW-0905">Primary microcephaly</keyword>
<keyword id="KW-1267">Proteomics identification</keyword>
<keyword id="KW-1185">Reference proteome</keyword>
<keyword id="KW-0804">Transcription</keyword>
<keyword id="KW-0805">Transcription regulation</keyword>
<sequence length="667" mass="71308">MHHQQRMAALGTDKELSDLLDFSAMFSPPVSSGKNGPTSLASGHFTGSNVEDRSSSGSWGNGGHPSPSRNYGDGTPYDHMTSRDLGSHDNLSPPFVNSRIQSKTERGSYSSYGRESNLQGCHQQSLLGGDMDMGNPGTLSPTKPGSQYYQYSSNNPRRRPLHSSAMEVQTKKVRKVPPGLPSSVYAPSASTADYNRDSPGYPSSKPATSTFPSSFFMQDGHHSSDPWSSSSGMNQPGYAGMLGNSSHIPQSSSYCSLHPHERLSYPSHSSADINSSLPPMSTFHRSGTNHYSTSSCTPPANGTDSIMANRGSGAAGSSQTGDALGKALASIYSPDHTNNSFSSNPSTPVGSPPSLSAGTAVWSRNGGQASSSPNYEGPLHSLQSRIEDRLERLDDAIHVLRNHAVGPSTAMPGGHGDMHGIIGPSHNGAMGGLGSGYGTGLLSANRHSLMVGTHREDGVALRGSHSLLPNQVPVPQLPVQSATSPDLNPPQDPYRGMPPGLQGQSVSSGSSEIKSDDEGDENLQDTKSSEDKKLDDDKKDIKSITSNNDDEDLTPEQKAEREKERRMANNARERLRVRDINEAFKELGRMVQLHLKSDKPQTKLLILHQAVAVILSLEQQVRERNLNPKAACLKRREEEKVSSEPPPLSLAGPHPGMGDASNHMGQM</sequence>
<accession>P15884</accession>
<accession>B3KT62</accession>
<accession>B3KUC0</accession>
<accession>B4DT37</accession>
<accession>B4DUG3</accession>
<accession>B7Z5M6</accession>
<accession>B7Z6Y1</accession>
<accession>G0LNT9</accession>
<accession>G0LNU0</accession>
<accession>G0LNU1</accession>
<accession>G0LNU2</accession>
<accession>G0LNU4</accession>
<accession>G0LNU5</accession>
<accession>G0LNU8</accession>
<accession>G0LNU9</accession>
<accession>G0LNV0</accession>
<accession>G0LNV1</accession>
<accession>G0LNV2</accession>
<accession>H3BPQ1</accession>
<accession>Q08AP2</accession>
<accession>Q08AP3</accession>
<accession>Q15439</accession>
<accession>Q15440</accession>
<accession>Q15441</accession>
<evidence type="ECO:0000250" key="1"/>
<evidence type="ECO:0000250" key="2">
    <source>
        <dbReference type="UniProtKB" id="Q62655"/>
    </source>
</evidence>
<evidence type="ECO:0000255" key="3">
    <source>
        <dbReference type="PROSITE-ProRule" id="PRU00981"/>
    </source>
</evidence>
<evidence type="ECO:0000256" key="4">
    <source>
        <dbReference type="SAM" id="MobiDB-lite"/>
    </source>
</evidence>
<evidence type="ECO:0000269" key="5">
    <source>
    </source>
</evidence>
<evidence type="ECO:0000269" key="6">
    <source>
    </source>
</evidence>
<evidence type="ECO:0000269" key="7">
    <source>
    </source>
</evidence>
<evidence type="ECO:0000269" key="8">
    <source>
    </source>
</evidence>
<evidence type="ECO:0000269" key="9">
    <source>
    </source>
</evidence>
<evidence type="ECO:0000269" key="10">
    <source>
    </source>
</evidence>
<evidence type="ECO:0000269" key="11">
    <source>
    </source>
</evidence>
<evidence type="ECO:0000269" key="12">
    <source>
    </source>
</evidence>
<evidence type="ECO:0000269" key="13">
    <source>
    </source>
</evidence>
<evidence type="ECO:0000269" key="14">
    <source>
    </source>
</evidence>
<evidence type="ECO:0000269" key="15">
    <source>
    </source>
</evidence>
<evidence type="ECO:0000269" key="16">
    <source>
    </source>
</evidence>
<evidence type="ECO:0000269" key="17">
    <source>
    </source>
</evidence>
<evidence type="ECO:0000269" key="18">
    <source>
    </source>
</evidence>
<evidence type="ECO:0000269" key="19">
    <source>
    </source>
</evidence>
<evidence type="ECO:0000303" key="20">
    <source>
    </source>
</evidence>
<evidence type="ECO:0000303" key="21">
    <source>
    </source>
</evidence>
<evidence type="ECO:0000303" key="22">
    <source>
    </source>
</evidence>
<evidence type="ECO:0000303" key="23">
    <source>
    </source>
</evidence>
<evidence type="ECO:0000303" key="24">
    <source ref="7"/>
</evidence>
<evidence type="ECO:0000305" key="25"/>
<evidence type="ECO:0007744" key="26">
    <source>
    </source>
</evidence>
<evidence type="ECO:0007744" key="27">
    <source>
    </source>
</evidence>
<evidence type="ECO:0007829" key="28">
    <source>
        <dbReference type="PDB" id="2KWF"/>
    </source>
</evidence>
<evidence type="ECO:0007829" key="29">
    <source>
        <dbReference type="PDB" id="6OD3"/>
    </source>
</evidence>
<protein>
    <recommendedName>
        <fullName>Transcription factor 4</fullName>
        <shortName>TCF-4</shortName>
    </recommendedName>
    <alternativeName>
        <fullName>Class B basic helix-loop-helix protein 19</fullName>
        <shortName>bHLHb19</shortName>
    </alternativeName>
    <alternativeName>
        <fullName>Immunoglobulin transcription factor 2</fullName>
        <shortName>ITF-2</shortName>
    </alternativeName>
    <alternativeName>
        <fullName>SL3-3 enhancer factor 2</fullName>
        <shortName>SEF-2</shortName>
    </alternativeName>
</protein>
<comment type="function">
    <text evidence="1">Transcription factor that binds to the immunoglobulin enhancer Mu-E5/KE5-motif. Involved in the initiation of neuronal differentiation. Activates transcription by binding to the E box (5'-CANNTG-3'). Binds to the E-box present in the somatostatin receptor 2 initiator element (SSTR2-INR) to activate transcription (By similarity). Preferentially binds to either 5'-ACANNTGT-3' or 5'-CCANNTGG-3'.</text>
</comment>
<comment type="subunit">
    <text evidence="1 13 17">Efficient DNA binding requires dimerization with another bHLH protein. Forms homo- or heterooligomers with myogenin. Interacts with HIVEP2. Interacts with NEUROD2 (By similarity). Interacts with AGBL1. Interacts with BHLHA9.</text>
</comment>
<comment type="interaction">
    <interactant intactId="EBI-533224">
        <id>P15884</id>
    </interactant>
    <interactant intactId="EBI-8643161">
        <id>Q9NX04</id>
        <label>AIRIM</label>
    </interactant>
    <organismsDiffer>false</organismsDiffer>
    <experiments>3</experiments>
</comment>
<comment type="interaction">
    <interactant intactId="EBI-533224">
        <id>P15884</id>
    </interactant>
    <interactant intactId="EBI-745213">
        <id>P29972</id>
        <label>AQP1</label>
    </interactant>
    <organismsDiffer>false</organismsDiffer>
    <experiments>3</experiments>
</comment>
<comment type="interaction">
    <interactant intactId="EBI-533224">
        <id>P15884</id>
    </interactant>
    <interactant intactId="EBI-465400">
        <id>Q92888</id>
        <label>ARHGEF1</label>
    </interactant>
    <organismsDiffer>false</organismsDiffer>
    <experiments>3</experiments>
</comment>
<comment type="interaction">
    <interactant intactId="EBI-533224">
        <id>P15884</id>
    </interactant>
    <interactant intactId="EBI-742909">
        <id>Q9H6L4</id>
        <label>ARMC7</label>
    </interactant>
    <organismsDiffer>false</organismsDiffer>
    <experiments>3</experiments>
</comment>
<comment type="interaction">
    <interactant intactId="EBI-533224">
        <id>P15884</id>
    </interactant>
    <interactant intactId="EBI-957042">
        <id>P50553</id>
        <label>ASCL1</label>
    </interactant>
    <organismsDiffer>false</organismsDiffer>
    <experiments>8</experiments>
</comment>
<comment type="interaction">
    <interactant intactId="EBI-533224">
        <id>P15884</id>
    </interactant>
    <interactant intactId="EBI-10254793">
        <id>Q6XD76</id>
        <label>ASCL4</label>
    </interactant>
    <organismsDiffer>false</organismsDiffer>
    <experiments>3</experiments>
</comment>
<comment type="interaction">
    <interactant intactId="EBI-533224">
        <id>P15884</id>
    </interactant>
    <interactant intactId="EBI-1993677">
        <id>Q9BZE9</id>
        <label>ASPSCR1</label>
    </interactant>
    <organismsDiffer>false</organismsDiffer>
    <experiments>3</experiments>
</comment>
<comment type="interaction">
    <interactant intactId="EBI-533224">
        <id>P15884</id>
    </interactant>
    <interactant intactId="EBI-4290814">
        <id>P21281</id>
        <label>ATP6V1B2</label>
    </interactant>
    <organismsDiffer>false</organismsDiffer>
    <experiments>3</experiments>
</comment>
<comment type="interaction">
    <interactant intactId="EBI-533224">
        <id>P15884</id>
    </interactant>
    <interactant intactId="EBI-1050106">
        <id>O75934</id>
        <label>BCAS2</label>
    </interactant>
    <organismsDiffer>false</organismsDiffer>
    <experiments>4</experiments>
</comment>
<comment type="interaction">
    <interactant intactId="EBI-533224">
        <id>P15884</id>
    </interactant>
    <interactant intactId="EBI-707714">
        <id>Q92843</id>
        <label>BCL2L2</label>
    </interactant>
    <organismsDiffer>false</organismsDiffer>
    <experiments>3</experiments>
</comment>
<comment type="interaction">
    <interactant intactId="EBI-533224">
        <id>P15884</id>
    </interactant>
    <interactant intactId="EBI-10311131">
        <id>Q9NP86</id>
        <label>CABP5</label>
    </interactant>
    <organismsDiffer>false</organismsDiffer>
    <experiments>5</experiments>
</comment>
<comment type="interaction">
    <interactant intactId="EBI-533224">
        <id>P15884</id>
    </interactant>
    <interactant intactId="EBI-375077">
        <id>P38936</id>
        <label>CDKN1A</label>
    </interactant>
    <organismsDiffer>false</organismsDiffer>
    <experiments>3</experiments>
</comment>
<comment type="interaction">
    <interactant intactId="EBI-533224">
        <id>P15884</id>
    </interactant>
    <interactant intactId="EBI-711290">
        <id>P42773</id>
        <label>CDKN2C</label>
    </interactant>
    <organismsDiffer>false</organismsDiffer>
    <experiments>4</experiments>
</comment>
<comment type="interaction">
    <interactant intactId="EBI-533224">
        <id>P15884</id>
    </interactant>
    <interactant intactId="EBI-10255140">
        <id>Q6ZQR2</id>
        <label>CFAP77</label>
    </interactant>
    <organismsDiffer>false</organismsDiffer>
    <experiments>3</experiments>
</comment>
<comment type="interaction">
    <interactant intactId="EBI-533224">
        <id>P15884</id>
    </interactant>
    <interactant intactId="EBI-1020839">
        <id>Q13111</id>
        <label>CHAF1A</label>
    </interactant>
    <organismsDiffer>false</organismsDiffer>
    <experiments>3</experiments>
</comment>
<comment type="interaction">
    <interactant intactId="EBI-533224">
        <id>P15884</id>
    </interactant>
    <interactant intactId="EBI-2321769">
        <id>Q9Y6H1</id>
        <label>CHCHD2</label>
    </interactant>
    <organismsDiffer>false</organismsDiffer>
    <experiments>3</experiments>
</comment>
<comment type="interaction">
    <interactant intactId="EBI-533224">
        <id>P15884</id>
    </interactant>
    <interactant intactId="EBI-741528">
        <id>Q9UKJ5</id>
        <label>CHIC2</label>
    </interactant>
    <organismsDiffer>false</organismsDiffer>
    <experiments>3</experiments>
</comment>
<comment type="interaction">
    <interactant intactId="EBI-533224">
        <id>P15884</id>
    </interactant>
    <interactant intactId="EBI-357706">
        <id>P12277</id>
        <label>CKB</label>
    </interactant>
    <organismsDiffer>false</organismsDiffer>
    <experiments>2</experiments>
</comment>
<comment type="interaction">
    <interactant intactId="EBI-533224">
        <id>P15884</id>
    </interactant>
    <interactant intactId="EBI-456371">
        <id>P61024</id>
        <label>CKS1B</label>
    </interactant>
    <organismsDiffer>false</organismsDiffer>
    <experiments>3</experiments>
</comment>
<comment type="interaction">
    <interactant intactId="EBI-533224">
        <id>P15884</id>
    </interactant>
    <interactant intactId="EBI-491549">
        <id>P35222</id>
        <label>CTNNB1</label>
    </interactant>
    <organismsDiffer>false</organismsDiffer>
    <experiments>22</experiments>
</comment>
<comment type="interaction">
    <interactant intactId="EBI-533224">
        <id>P15884</id>
    </interactant>
    <interactant intactId="EBI-351257">
        <id>P26196</id>
        <label>DDX6</label>
    </interactant>
    <organismsDiffer>false</organismsDiffer>
    <experiments>3</experiments>
</comment>
<comment type="interaction">
    <interactant intactId="EBI-533224">
        <id>P15884</id>
    </interactant>
    <interactant intactId="EBI-745369">
        <id>Q9H4E7</id>
        <label>DEF6</label>
    </interactant>
    <organismsDiffer>false</organismsDiffer>
    <experiments>4</experiments>
</comment>
<comment type="interaction">
    <interactant intactId="EBI-533224">
        <id>P15884</id>
    </interactant>
    <interactant intactId="EBI-9679045">
        <id>Q9NQL9</id>
        <label>DMRT3</label>
    </interactant>
    <organismsDiffer>false</organismsDiffer>
    <experiments>3</experiments>
</comment>
<comment type="interaction">
    <interactant intactId="EBI-533224">
        <id>P15884</id>
    </interactant>
    <interactant intactId="EBI-743105">
        <id>Q5JVL4</id>
        <label>EFHC1</label>
    </interactant>
    <organismsDiffer>false</organismsDiffer>
    <experiments>7</experiments>
</comment>
<comment type="interaction">
    <interactant intactId="EBI-533224">
        <id>P15884</id>
    </interactant>
    <interactant intactId="EBI-398610">
        <id>O60573</id>
        <label>EIF4E2</label>
    </interactant>
    <organismsDiffer>false</organismsDiffer>
    <experiments>3</experiments>
</comment>
<comment type="interaction">
    <interactant intactId="EBI-533224">
        <id>P15884</id>
    </interactant>
    <interactant intactId="EBI-74090">
        <id>Q13541</id>
        <label>EIF4EBP1</label>
    </interactant>
    <organismsDiffer>false</organismsDiffer>
    <experiments>3</experiments>
</comment>
<comment type="interaction">
    <interactant intactId="EBI-533224">
        <id>P15884</id>
    </interactant>
    <interactant intactId="EBI-10326138">
        <id>Q9Y2J2-3</id>
        <label>EPB41L3</label>
    </interactant>
    <organismsDiffer>false</organismsDiffer>
    <experiments>3</experiments>
</comment>
<comment type="interaction">
    <interactant intactId="EBI-533224">
        <id>P15884</id>
    </interactant>
    <interactant intactId="EBI-10182490">
        <id>O15197-2</id>
        <label>EPHB6</label>
    </interactant>
    <organismsDiffer>false</organismsDiffer>
    <experiments>3</experiments>
</comment>
<comment type="interaction">
    <interactant intactId="EBI-533224">
        <id>P15884</id>
    </interactant>
    <interactant intactId="EBI-371892">
        <id>Q9Y3B2</id>
        <label>EXOSC1</label>
    </interactant>
    <organismsDiffer>false</organismsDiffer>
    <experiments>4</experiments>
</comment>
<comment type="interaction">
    <interactant intactId="EBI-533224">
        <id>P15884</id>
    </interactant>
    <interactant intactId="EBI-4397076">
        <id>P16930</id>
        <label>FAH</label>
    </interactant>
    <organismsDiffer>false</organismsDiffer>
    <experiments>3</experiments>
</comment>
<comment type="interaction">
    <interactant intactId="EBI-533224">
        <id>P15884</id>
    </interactant>
    <interactant intactId="EBI-741626">
        <id>Q9H5Z6</id>
        <label>FAM124B</label>
    </interactant>
    <organismsDiffer>false</organismsDiffer>
    <experiments>3</experiments>
</comment>
<comment type="interaction">
    <interactant intactId="EBI-533224">
        <id>P15884</id>
    </interactant>
    <interactant intactId="EBI-10183007">
        <id>Q96RJ6</id>
        <label>FERD3L</label>
    </interactant>
    <organismsDiffer>false</organismsDiffer>
    <experiments>5</experiments>
</comment>
<comment type="interaction">
    <interactant intactId="EBI-533224">
        <id>P15884</id>
    </interactant>
    <interactant intactId="EBI-4399465">
        <id>Q96AC1</id>
        <label>FERMT2</label>
    </interactant>
    <organismsDiffer>false</organismsDiffer>
    <experiments>6</experiments>
</comment>
<comment type="interaction">
    <interactant intactId="EBI-533224">
        <id>P15884</id>
    </interactant>
    <interactant intactId="EBI-742815">
        <id>Q8NFF5</id>
        <label>FLAD1</label>
    </interactant>
    <organismsDiffer>false</organismsDiffer>
    <experiments>3</experiments>
</comment>
<comment type="interaction">
    <interactant intactId="EBI-533224">
        <id>P15884</id>
    </interactant>
    <interactant intactId="EBI-9641086">
        <id>P21333-2</id>
        <label>FLNA</label>
    </interactant>
    <organismsDiffer>false</organismsDiffer>
    <experiments>3</experiments>
</comment>
<comment type="interaction">
    <interactant intactId="EBI-533224">
        <id>P15884</id>
    </interactant>
    <interactant intactId="EBI-725515">
        <id>O43559</id>
        <label>FRS3</label>
    </interactant>
    <organismsDiffer>false</organismsDiffer>
    <experiments>3</experiments>
</comment>
<comment type="interaction">
    <interactant intactId="EBI-533224">
        <id>P15884</id>
    </interactant>
    <interactant intactId="EBI-744104">
        <id>P55040</id>
        <label>GEM</label>
    </interactant>
    <organismsDiffer>false</organismsDiffer>
    <experiments>3</experiments>
</comment>
<comment type="interaction">
    <interactant intactId="EBI-533224">
        <id>P15884</id>
    </interactant>
    <interactant intactId="EBI-374781">
        <id>O76003</id>
        <label>GLRX3</label>
    </interactant>
    <organismsDiffer>false</organismsDiffer>
    <experiments>3</experiments>
</comment>
<comment type="interaction">
    <interactant intactId="EBI-533224">
        <id>P15884</id>
    </interactant>
    <interactant intactId="EBI-10211741">
        <id>P50151</id>
        <label>GNG10</label>
    </interactant>
    <organismsDiffer>false</organismsDiffer>
    <experiments>3</experiments>
</comment>
<comment type="interaction">
    <interactant intactId="EBI-533224">
        <id>P15884</id>
    </interactant>
    <interactant intactId="EBI-10181276">
        <id>Q0D2H9</id>
        <label>GOLGA8DP</label>
    </interactant>
    <organismsDiffer>false</organismsDiffer>
    <experiments>3</experiments>
</comment>
<comment type="interaction">
    <interactant intactId="EBI-533224">
        <id>P15884</id>
    </interactant>
    <interactant intactId="EBI-10181260">
        <id>Q08AF8</id>
        <label>GOLGA8G</label>
    </interactant>
    <organismsDiffer>false</organismsDiffer>
    <experiments>3</experiments>
</comment>
<comment type="interaction">
    <interactant intactId="EBI-533224">
        <id>P15884</id>
    </interactant>
    <interactant intactId="EBI-739467">
        <id>Q9H8Y8</id>
        <label>GORASP2</label>
    </interactant>
    <organismsDiffer>false</organismsDiffer>
    <experiments>4</experiments>
</comment>
<comment type="interaction">
    <interactant intactId="EBI-533224">
        <id>P15884</id>
    </interactant>
    <interactant intactId="EBI-8293751">
        <id>Q96NT3</id>
        <label>GUCD1</label>
    </interactant>
    <organismsDiffer>false</organismsDiffer>
    <experiments>3</experiments>
</comment>
<comment type="interaction">
    <interactant intactId="EBI-533224">
        <id>P15884</id>
    </interactant>
    <interactant intactId="EBI-10218584">
        <id>P61296</id>
        <label>HAND2</label>
    </interactant>
    <organismsDiffer>false</organismsDiffer>
    <experiments>4</experiments>
</comment>
<comment type="interaction">
    <interactant intactId="EBI-533224">
        <id>P15884</id>
    </interactant>
    <interactant intactId="EBI-2339359">
        <id>O14929</id>
        <label>HAT1</label>
    </interactant>
    <organismsDiffer>false</organismsDiffer>
    <experiments>3</experiments>
</comment>
<comment type="interaction">
    <interactant intactId="EBI-533224">
        <id>P15884</id>
    </interactant>
    <interactant intactId="EBI-10330249">
        <id>V9HWF5</id>
        <label>HEL-S-69p</label>
    </interactant>
    <organismsDiffer>false</organismsDiffer>
    <experiments>3</experiments>
</comment>
<comment type="interaction">
    <interactant intactId="EBI-533224">
        <id>P15884</id>
    </interactant>
    <interactant intactId="EBI-739361">
        <id>Q9UBY9</id>
        <label>HSPB7</label>
    </interactant>
    <organismsDiffer>false</organismsDiffer>
    <experiments>3</experiments>
</comment>
<comment type="interaction">
    <interactant intactId="EBI-533224">
        <id>P15884</id>
    </interactant>
    <interactant intactId="EBI-1215527">
        <id>P41134</id>
        <label>ID1</label>
    </interactant>
    <organismsDiffer>false</organismsDiffer>
    <experiments>4</experiments>
</comment>
<comment type="interaction">
    <interactant intactId="EBI-533224">
        <id>P15884</id>
    </interactant>
    <interactant intactId="EBI-713450">
        <id>Q02363</id>
        <label>ID2</label>
    </interactant>
    <organismsDiffer>false</organismsDiffer>
    <experiments>4</experiments>
</comment>
<comment type="interaction">
    <interactant intactId="EBI-533224">
        <id>P15884</id>
    </interactant>
    <interactant intactId="EBI-1387094">
        <id>Q02535</id>
        <label>ID3</label>
    </interactant>
    <organismsDiffer>false</organismsDiffer>
    <experiments>6</experiments>
</comment>
<comment type="interaction">
    <interactant intactId="EBI-533224">
        <id>P15884</id>
    </interactant>
    <interactant intactId="EBI-10178524">
        <id>I3WAC9</id>
        <label>INS</label>
    </interactant>
    <organismsDiffer>false</organismsDiffer>
    <experiments>3</experiments>
</comment>
<comment type="interaction">
    <interactant intactId="EBI-533224">
        <id>P15884</id>
    </interactant>
    <interactant intactId="EBI-399080">
        <id>Q92993</id>
        <label>KAT5</label>
    </interactant>
    <organismsDiffer>false</organismsDiffer>
    <experiments>3</experiments>
</comment>
<comment type="interaction">
    <interactant intactId="EBI-533224">
        <id>P15884</id>
    </interactant>
    <interactant intactId="EBI-10189448">
        <id>Q9BQ13</id>
        <label>KCTD14</label>
    </interactant>
    <organismsDiffer>false</organismsDiffer>
    <experiments>3</experiments>
</comment>
<comment type="interaction">
    <interactant intactId="EBI-533224">
        <id>P15884</id>
    </interactant>
    <interactant intactId="EBI-1643885">
        <id>Q6P597</id>
        <label>KLC3</label>
    </interactant>
    <organismsDiffer>false</organismsDiffer>
    <experiments>3</experiments>
</comment>
<comment type="interaction">
    <interactant intactId="EBI-533224">
        <id>P15884</id>
    </interactant>
    <interactant intactId="EBI-10247181">
        <id>Q5THT1</id>
        <label>KLHL32</label>
    </interactant>
    <organismsDiffer>false</organismsDiffer>
    <experiments>3</experiments>
</comment>
<comment type="interaction">
    <interactant intactId="EBI-533224">
        <id>P15884</id>
    </interactant>
    <interactant intactId="EBI-742828">
        <id>Q14847</id>
        <label>LASP1</label>
    </interactant>
    <organismsDiffer>false</organismsDiffer>
    <experiments>3</experiments>
</comment>
<comment type="interaction">
    <interactant intactId="EBI-533224">
        <id>P15884</id>
    </interactant>
    <interactant intactId="EBI-726510">
        <id>Q96BZ8</id>
        <label>LENG1</label>
    </interactant>
    <organismsDiffer>false</organismsDiffer>
    <experiments>3</experiments>
</comment>
<comment type="interaction">
    <interactant intactId="EBI-533224">
        <id>P15884</id>
    </interactant>
    <interactant intactId="EBI-10274069">
        <id>Q8TCE9</id>
        <label>LGALS14</label>
    </interactant>
    <organismsDiffer>false</organismsDiffer>
    <experiments>4</experiments>
</comment>
<comment type="interaction">
    <interactant intactId="EBI-533224">
        <id>P15884</id>
    </interactant>
    <interactant intactId="EBI-8639312">
        <id>P25800</id>
        <label>LMO1</label>
    </interactant>
    <organismsDiffer>false</organismsDiffer>
    <experiments>3</experiments>
</comment>
<comment type="interaction">
    <interactant intactId="EBI-533224">
        <id>P15884</id>
    </interactant>
    <interactant intactId="EBI-11742507">
        <id>Q8TAP4-4</id>
        <label>LMO3</label>
    </interactant>
    <organismsDiffer>false</organismsDiffer>
    <experiments>3</experiments>
</comment>
<comment type="interaction">
    <interactant intactId="EBI-533224">
        <id>P15884</id>
    </interactant>
    <interactant intactId="EBI-2798728">
        <id>P61968</id>
        <label>LMO4</label>
    </interactant>
    <organismsDiffer>false</organismsDiffer>
    <experiments>3</experiments>
</comment>
<comment type="interaction">
    <interactant intactId="EBI-533224">
        <id>P15884</id>
    </interactant>
    <interactant intactId="EBI-2805360">
        <id>Q9UIQ6</id>
        <label>LNPEP</label>
    </interactant>
    <organismsDiffer>false</organismsDiffer>
    <experiments>3</experiments>
</comment>
<comment type="interaction">
    <interactant intactId="EBI-533224">
        <id>P15884</id>
    </interactant>
    <interactant intactId="EBI-77889">
        <id>Q9UI95</id>
        <label>MAD2L2</label>
    </interactant>
    <organismsDiffer>false</organismsDiffer>
    <experiments>3</experiments>
</comment>
<comment type="interaction">
    <interactant intactId="EBI-533224">
        <id>P15884</id>
    </interactant>
    <interactant intactId="EBI-746778">
        <id>Q96A72</id>
        <label>MAGOHB</label>
    </interactant>
    <organismsDiffer>false</organismsDiffer>
    <experiments>3</experiments>
</comment>
<comment type="interaction">
    <interactant intactId="EBI-533224">
        <id>P15884</id>
    </interactant>
    <interactant intactId="EBI-947402">
        <id>O60336</id>
        <label>MAPKBP1</label>
    </interactant>
    <organismsDiffer>false</organismsDiffer>
    <experiments>3</experiments>
</comment>
<comment type="interaction">
    <interactant intactId="EBI-533224">
        <id>P15884</id>
    </interactant>
    <interactant intactId="EBI-6262458">
        <id>O15232</id>
        <label>MATN3</label>
    </interactant>
    <organismsDiffer>false</organismsDiffer>
    <experiments>3</experiments>
</comment>
<comment type="interaction">
    <interactant intactId="EBI-533224">
        <id>P15884</id>
    </interactant>
    <interactant intactId="EBI-1104564">
        <id>Q9Y316</id>
        <label>MEMO1</label>
    </interactant>
    <organismsDiffer>false</organismsDiffer>
    <experiments>3</experiments>
</comment>
<comment type="interaction">
    <interactant intactId="EBI-533224">
        <id>P15884</id>
    </interactant>
    <interactant intactId="EBI-5773143">
        <id>Q6P2C6</id>
        <label>MLLT6</label>
    </interactant>
    <organismsDiffer>false</organismsDiffer>
    <experiments>3</experiments>
</comment>
<comment type="interaction">
    <interactant intactId="EBI-533224">
        <id>P15884</id>
    </interactant>
    <interactant intactId="EBI-10269566">
        <id>Q8NDC4</id>
        <label>MORN4</label>
    </interactant>
    <organismsDiffer>false</organismsDiffer>
    <experiments>3</experiments>
</comment>
<comment type="interaction">
    <interactant intactId="EBI-533224">
        <id>P15884</id>
    </interactant>
    <interactant intactId="EBI-748896">
        <id>Q96HT8</id>
        <label>MRFAP1L1</label>
    </interactant>
    <organismsDiffer>false</organismsDiffer>
    <experiments>3</experiments>
</comment>
<comment type="interaction">
    <interactant intactId="EBI-533224">
        <id>P15884</id>
    </interactant>
    <interactant intactId="EBI-723524">
        <id>Q7Z7H8</id>
        <label>MRPL10</label>
    </interactant>
    <organismsDiffer>false</organismsDiffer>
    <experiments>3</experiments>
</comment>
<comment type="interaction">
    <interactant intactId="EBI-533224">
        <id>P15884</id>
    </interactant>
    <interactant intactId="EBI-8634060">
        <id>Q8IXL7</id>
        <label>MSRB3</label>
    </interactant>
    <organismsDiffer>false</organismsDiffer>
    <experiments>3</experiments>
</comment>
<comment type="interaction">
    <interactant intactId="EBI-533224">
        <id>P15884</id>
    </interactant>
    <interactant intactId="EBI-311356">
        <id>Q9ULV0</id>
        <label>MYO5B</label>
    </interactant>
    <organismsDiffer>false</organismsDiffer>
    <experiments>3</experiments>
</comment>
<comment type="interaction">
    <interactant intactId="EBI-533224">
        <id>P15884</id>
    </interactant>
    <interactant intactId="EBI-713635">
        <id>O43639</id>
        <label>NCK2</label>
    </interactant>
    <organismsDiffer>false</organismsDiffer>
    <experiments>3</experiments>
</comment>
<comment type="interaction">
    <interactant intactId="EBI-533224">
        <id>P15884</id>
    </interactant>
    <interactant intactId="EBI-10249760">
        <id>Q9UHB4</id>
        <label>NDOR1</label>
    </interactant>
    <organismsDiffer>false</organismsDiffer>
    <experiments>4</experiments>
</comment>
<comment type="interaction">
    <interactant intactId="EBI-533224">
        <id>P15884</id>
    </interactant>
    <interactant intactId="EBI-740364">
        <id>Q9HC98</id>
        <label>NEK6</label>
    </interactant>
    <organismsDiffer>false</organismsDiffer>
    <experiments>4</experiments>
</comment>
<comment type="interaction">
    <interactant intactId="EBI-533224">
        <id>P15884</id>
    </interactant>
    <interactant intactId="EBI-1752987">
        <id>Q86SG6</id>
        <label>NEK8</label>
    </interactant>
    <organismsDiffer>false</organismsDiffer>
    <experiments>3</experiments>
</comment>
<comment type="interaction">
    <interactant intactId="EBI-533224">
        <id>P15884</id>
    </interactant>
    <interactant intactId="EBI-10277551">
        <id>Q8WWR8-2</id>
        <label>NEU4</label>
    </interactant>
    <organismsDiffer>false</organismsDiffer>
    <experiments>3</experiments>
</comment>
<comment type="interaction">
    <interactant intactId="EBI-533224">
        <id>P15884</id>
    </interactant>
    <interactant intactId="EBI-10279647">
        <id>Q92886</id>
        <label>NEUROG1</label>
    </interactant>
    <organismsDiffer>false</organismsDiffer>
    <experiments>4</experiments>
</comment>
<comment type="interaction">
    <interactant intactId="EBI-533224">
        <id>P15884</id>
    </interactant>
    <interactant intactId="EBI-744782">
        <id>Q9Y5B8</id>
        <label>NME7</label>
    </interactant>
    <organismsDiffer>false</organismsDiffer>
    <experiments>3</experiments>
</comment>
<comment type="interaction">
    <interactant intactId="EBI-533224">
        <id>P15884</id>
    </interactant>
    <interactant intactId="EBI-10303844">
        <id>Q9GZQ4</id>
        <label>NMUR2</label>
    </interactant>
    <organismsDiffer>false</organismsDiffer>
    <experiments>3</experiments>
</comment>
<comment type="interaction">
    <interactant intactId="EBI-533224">
        <id>P15884</id>
    </interactant>
    <interactant intactId="EBI-1055462">
        <id>Q5SY16</id>
        <label>NOL9</label>
    </interactant>
    <organismsDiffer>false</organismsDiffer>
    <experiments>3</experiments>
</comment>
<comment type="interaction">
    <interactant intactId="EBI-533224">
        <id>P15884</id>
    </interactant>
    <interactant intactId="EBI-10260040">
        <id>Q86WQ0</id>
        <label>NR2C2AP</label>
    </interactant>
    <organismsDiffer>false</organismsDiffer>
    <experiments>3</experiments>
</comment>
<comment type="interaction">
    <interactant intactId="EBI-533224">
        <id>P15884</id>
    </interactant>
    <interactant intactId="EBI-726826">
        <id>Q8NFP7</id>
        <label>NUDT10</label>
    </interactant>
    <organismsDiffer>false</organismsDiffer>
    <experiments>3</experiments>
</comment>
<comment type="interaction">
    <interactant intactId="EBI-533224">
        <id>P15884</id>
    </interactant>
    <interactant intactId="EBI-374889">
        <id>O43929</id>
        <label>ORC4</label>
    </interactant>
    <organismsDiffer>false</organismsDiffer>
    <experiments>3</experiments>
</comment>
<comment type="interaction">
    <interactant intactId="EBI-533224">
        <id>P15884</id>
    </interactant>
    <interactant intactId="EBI-9057006">
        <id>Q9UJX0</id>
        <label>OSGIN1</label>
    </interactant>
    <organismsDiffer>false</organismsDiffer>
    <experiments>4</experiments>
</comment>
<comment type="interaction">
    <interactant intactId="EBI-533224">
        <id>P15884</id>
    </interactant>
    <interactant intactId="EBI-1054396">
        <id>Q01804</id>
        <label>OTUD4</label>
    </interactant>
    <organismsDiffer>false</organismsDiffer>
    <experiments>3</experiments>
</comment>
<comment type="interaction">
    <interactant intactId="EBI-533224">
        <id>P15884</id>
    </interactant>
    <interactant intactId="EBI-10277790">
        <id>Q8WXA2</id>
        <label>PATE1</label>
    </interactant>
    <organismsDiffer>false</organismsDiffer>
    <experiments>3</experiments>
</comment>
<comment type="interaction">
    <interactant intactId="EBI-533224">
        <id>P15884</id>
    </interactant>
    <interactant intactId="EBI-750589">
        <id>P30039</id>
        <label>PBLD</label>
    </interactant>
    <organismsDiffer>false</organismsDiffer>
    <experiments>3</experiments>
</comment>
<comment type="interaction">
    <interactant intactId="EBI-533224">
        <id>P15884</id>
    </interactant>
    <interactant intactId="EBI-714158">
        <id>Q13526</id>
        <label>PIN1</label>
    </interactant>
    <organismsDiffer>false</organismsDiffer>
    <experiments>3</experiments>
</comment>
<comment type="interaction">
    <interactant intactId="EBI-533224">
        <id>P15884</id>
    </interactant>
    <interactant intactId="EBI-10241513">
        <id>Q494U1</id>
        <label>PLEKHN1</label>
    </interactant>
    <organismsDiffer>false</organismsDiffer>
    <experiments>4</experiments>
</comment>
<comment type="interaction">
    <interactant intactId="EBI-533224">
        <id>P15884</id>
    </interactant>
    <interactant intactId="EBI-359472">
        <id>O95602</id>
        <label>POLR1A</label>
    </interactant>
    <organismsDiffer>false</organismsDiffer>
    <experiments>3</experiments>
</comment>
<comment type="interaction">
    <interactant intactId="EBI-533224">
        <id>P15884</id>
    </interactant>
    <interactant intactId="EBI-1055079">
        <id>O15160</id>
        <label>POLR1C</label>
    </interactant>
    <organismsDiffer>false</organismsDiffer>
    <experiments>3</experiments>
</comment>
<comment type="interaction">
    <interactant intactId="EBI-533224">
        <id>P15884</id>
    </interactant>
    <interactant intactId="EBI-25884072">
        <id>P62937-2</id>
        <label>PPIA</label>
    </interactant>
    <organismsDiffer>false</organismsDiffer>
    <experiments>3</experiments>
</comment>
<comment type="interaction">
    <interactant intactId="EBI-533224">
        <id>P15884</id>
    </interactant>
    <interactant intactId="EBI-2557649">
        <id>Q9Y3C6</id>
        <label>PPIL1</label>
    </interactant>
    <organismsDiffer>false</organismsDiffer>
    <experiments>3</experiments>
</comment>
<comment type="interaction">
    <interactant intactId="EBI-533224">
        <id>P15884</id>
    </interactant>
    <interactant intactId="EBI-2557469">
        <id>Q6NYC8</id>
        <label>PPP1R18</label>
    </interactant>
    <organismsDiffer>false</organismsDiffer>
    <experiments>3</experiments>
</comment>
<comment type="interaction">
    <interactant intactId="EBI-533224">
        <id>P15884</id>
    </interactant>
    <interactant intactId="EBI-1383852">
        <id>P54646</id>
        <label>PRKAA2</label>
    </interactant>
    <organismsDiffer>false</organismsDiffer>
    <experiments>3</experiments>
</comment>
<comment type="interaction">
    <interactant intactId="EBI-533224">
        <id>P15884</id>
    </interactant>
    <interactant intactId="EBI-1383528">
        <id>P17252</id>
        <label>PRKCA</label>
    </interactant>
    <organismsDiffer>false</organismsDiffer>
    <experiments>3</experiments>
</comment>
<comment type="interaction">
    <interactant intactId="EBI-533224">
        <id>P15884</id>
    </interactant>
    <interactant intactId="EBI-359352">
        <id>P25786</id>
        <label>PSMA1</label>
    </interactant>
    <organismsDiffer>false</organismsDiffer>
    <experiments>3</experiments>
</comment>
<comment type="interaction">
    <interactant intactId="EBI-533224">
        <id>P15884</id>
    </interactant>
    <interactant intactId="EBI-723276">
        <id>Q969U7</id>
        <label>PSMG2</label>
    </interactant>
    <organismsDiffer>false</organismsDiffer>
    <experiments>3</experiments>
</comment>
<comment type="interaction">
    <interactant intactId="EBI-533224">
        <id>P15884</id>
    </interactant>
    <interactant intactId="EBI-10234038">
        <id>P43115-12</id>
        <label>PTGER3</label>
    </interactant>
    <organismsDiffer>false</organismsDiffer>
    <experiments>3</experiments>
</comment>
<comment type="interaction">
    <interactant intactId="EBI-533224">
        <id>P15884</id>
    </interactant>
    <interactant intactId="EBI-10244509">
        <id>Q5JT25</id>
        <label>RAB41</label>
    </interactant>
    <organismsDiffer>false</organismsDiffer>
    <experiments>3</experiments>
</comment>
<comment type="interaction">
    <interactant intactId="EBI-533224">
        <id>P15884</id>
    </interactant>
    <interactant intactId="EBI-713992">
        <id>P47224</id>
        <label>RABIF</label>
    </interactant>
    <organismsDiffer>false</organismsDiffer>
    <experiments>3</experiments>
</comment>
<comment type="interaction">
    <interactant intactId="EBI-533224">
        <id>P15884</id>
    </interactant>
    <interactant intactId="EBI-10253121">
        <id>Q6P9E2</id>
        <label>RECK</label>
    </interactant>
    <organismsDiffer>false</organismsDiffer>
    <experiments>3</experiments>
</comment>
<comment type="interaction">
    <interactant intactId="EBI-533224">
        <id>P15884</id>
    </interactant>
    <interactant intactId="EBI-10223388">
        <id>Q04206-3</id>
        <label>RELA</label>
    </interactant>
    <organismsDiffer>false</organismsDiffer>
    <experiments>3</experiments>
</comment>
<comment type="interaction">
    <interactant intactId="EBI-533224">
        <id>P15884</id>
    </interactant>
    <interactant intactId="EBI-10262361">
        <id>Q8IX06</id>
        <label>REXO1L1P</label>
    </interactant>
    <organismsDiffer>false</organismsDiffer>
    <experiments>3</experiments>
</comment>
<comment type="interaction">
    <interactant intactId="EBI-533224">
        <id>P15884</id>
    </interactant>
    <interactant intactId="EBI-748350">
        <id>Q9UHP6</id>
        <label>RSPH14</label>
    </interactant>
    <organismsDiffer>false</organismsDiffer>
    <experiments>3</experiments>
</comment>
<comment type="interaction">
    <interactant intactId="EBI-533224">
        <id>P15884</id>
    </interactant>
    <interactant intactId="EBI-2686537">
        <id>Q9UIL1</id>
        <label>SCOC</label>
    </interactant>
    <organismsDiffer>false</organismsDiffer>
    <experiments>3</experiments>
</comment>
<comment type="interaction">
    <interactant intactId="EBI-533224">
        <id>P15884</id>
    </interactant>
    <interactant intactId="EBI-10320311">
        <id>Q9UDX3</id>
        <label>SEC14L4</label>
    </interactant>
    <organismsDiffer>false</organismsDiffer>
    <experiments>3</experiments>
</comment>
<comment type="interaction">
    <interactant intactId="EBI-533224">
        <id>P15884</id>
    </interactant>
    <interactant intactId="EBI-9090795">
        <id>Q15047-2</id>
        <label>SETDB1</label>
    </interactant>
    <organismsDiffer>false</organismsDiffer>
    <experiments>3</experiments>
</comment>
<comment type="interaction">
    <interactant intactId="EBI-533224">
        <id>P15884</id>
    </interactant>
    <interactant intactId="EBI-10251550">
        <id>Q6NXQ0</id>
        <label>SFRS2</label>
    </interactant>
    <organismsDiffer>false</organismsDiffer>
    <experiments>3</experiments>
</comment>
<comment type="interaction">
    <interactant intactId="EBI-533224">
        <id>P15884</id>
    </interactant>
    <interactant intactId="EBI-743117">
        <id>Q96ES7</id>
        <label>SGF29</label>
    </interactant>
    <organismsDiffer>false</organismsDiffer>
    <experiments>7</experiments>
</comment>
<comment type="interaction">
    <interactant intactId="EBI-533224">
        <id>P15884</id>
    </interactant>
    <interactant intactId="EBI-10313866">
        <id>Q9NUL5</id>
        <label>SHFL</label>
    </interactant>
    <organismsDiffer>false</organismsDiffer>
    <experiments>3</experiments>
</comment>
<comment type="interaction">
    <interactant intactId="EBI-533224">
        <id>P15884</id>
    </interactant>
    <interactant intactId="EBI-2814604">
        <id>O43699</id>
        <label>SIGLEC6</label>
    </interactant>
    <organismsDiffer>false</organismsDiffer>
    <experiments>3</experiments>
</comment>
<comment type="interaction">
    <interactant intactId="EBI-533224">
        <id>P15884</id>
    </interactant>
    <interactant intactId="EBI-10287091">
        <id>Q96H72</id>
        <label>SLC39A13</label>
    </interactant>
    <organismsDiffer>false</organismsDiffer>
    <experiments>3</experiments>
</comment>
<comment type="interaction">
    <interactant intactId="EBI-533224">
        <id>P15884</id>
    </interactant>
    <interactant intactId="EBI-1999704">
        <id>Q9BWU0</id>
        <label>SLC4A1AP</label>
    </interactant>
    <organismsDiffer>false</organismsDiffer>
    <experiments>3</experiments>
</comment>
<comment type="interaction">
    <interactant intactId="EBI-533224">
        <id>P15884</id>
    </interactant>
    <interactant intactId="EBI-750494">
        <id>P49901</id>
        <label>SMCP</label>
    </interactant>
    <organismsDiffer>false</organismsDiffer>
    <experiments>3</experiments>
</comment>
<comment type="interaction">
    <interactant intactId="EBI-533224">
        <id>P15884</id>
    </interactant>
    <interactant intactId="EBI-2801103">
        <id>Q9H4F8</id>
        <label>SMOC1</label>
    </interactant>
    <organismsDiffer>false</organismsDiffer>
    <experiments>3</experiments>
</comment>
<comment type="interaction">
    <interactant intactId="EBI-533224">
        <id>P15884</id>
    </interactant>
    <interactant intactId="EBI-372911">
        <id>Q9H0A9</id>
        <label>SPATC1L</label>
    </interactant>
    <organismsDiffer>false</organismsDiffer>
    <experiments>3</experiments>
</comment>
<comment type="interaction">
    <interactant intactId="EBI-533224">
        <id>P15884</id>
    </interactant>
    <interactant intactId="EBI-742688">
        <id>Q9NZD8</id>
        <label>SPG21</label>
    </interactant>
    <organismsDiffer>false</organismsDiffer>
    <experiments>3</experiments>
</comment>
<comment type="interaction">
    <interactant intactId="EBI-533224">
        <id>P15884</id>
    </interactant>
    <interactant intactId="EBI-745021">
        <id>Q96FJ0</id>
        <label>STAMBPL1</label>
    </interactant>
    <organismsDiffer>false</organismsDiffer>
    <experiments>3</experiments>
</comment>
<comment type="interaction">
    <interactant intactId="EBI-533224">
        <id>P15884</id>
    </interactant>
    <interactant intactId="EBI-749295">
        <id>O75716</id>
        <label>STK16</label>
    </interactant>
    <organismsDiffer>false</organismsDiffer>
    <experiments>3</experiments>
</comment>
<comment type="interaction">
    <interactant intactId="EBI-533224">
        <id>P15884</id>
    </interactant>
    <interactant intactId="EBI-714135">
        <id>O75558</id>
        <label>STX11</label>
    </interactant>
    <organismsDiffer>false</organismsDiffer>
    <experiments>3</experiments>
</comment>
<comment type="interaction">
    <interactant intactId="EBI-533224">
        <id>P15884</id>
    </interactant>
    <interactant intactId="EBI-10245139">
        <id>Q5T011-5</id>
        <label>SZT2</label>
    </interactant>
    <organismsDiffer>false</organismsDiffer>
    <experiments>3</experiments>
</comment>
<comment type="interaction">
    <interactant intactId="EBI-533224">
        <id>P15884</id>
    </interactant>
    <interactant intactId="EBI-1753878">
        <id>P17542</id>
        <label>TAL1</label>
    </interactant>
    <organismsDiffer>false</organismsDiffer>
    <experiments>5</experiments>
</comment>
<comment type="interaction">
    <interactant intactId="EBI-533224">
        <id>P15884</id>
    </interactant>
    <interactant intactId="EBI-10237959">
        <id>Q16559</id>
        <label>TAL2</label>
    </interactant>
    <organismsDiffer>false</organismsDiffer>
    <experiments>4</experiments>
</comment>
<comment type="interaction">
    <interactant intactId="EBI-533224">
        <id>P15884</id>
    </interactant>
    <interactant intactId="EBI-710310">
        <id>Q15560</id>
        <label>TCEA2</label>
    </interactant>
    <organismsDiffer>false</organismsDiffer>
    <experiments>3</experiments>
</comment>
<comment type="interaction">
    <interactant intactId="EBI-533224">
        <id>P15884</id>
    </interactant>
    <interactant intactId="EBI-533224">
        <id>P15884</id>
        <label>TCF4</label>
    </interactant>
    <organismsDiffer>false</organismsDiffer>
    <experiments>3</experiments>
</comment>
<comment type="interaction">
    <interactant intactId="EBI-533224">
        <id>P15884</id>
    </interactant>
    <interactant intactId="EBI-749995">
        <id>P56279</id>
        <label>TCL1A</label>
    </interactant>
    <organismsDiffer>false</organismsDiffer>
    <experiments>3</experiments>
</comment>
<comment type="interaction">
    <interactant intactId="EBI-533224">
        <id>P15884</id>
    </interactant>
    <interactant intactId="EBI-717810">
        <id>Q08117</id>
        <label>TLE5</label>
    </interactant>
    <organismsDiffer>false</organismsDiffer>
    <experiments>3</experiments>
</comment>
<comment type="interaction">
    <interactant intactId="EBI-533224">
        <id>P15884</id>
    </interactant>
    <interactant intactId="EBI-366083">
        <id>P04637</id>
        <label>TP53</label>
    </interactant>
    <organismsDiffer>false</organismsDiffer>
    <experiments>2</experiments>
</comment>
<comment type="interaction">
    <interactant intactId="EBI-533224">
        <id>P15884</id>
    </interactant>
    <interactant intactId="EBI-747601">
        <id>Q9UL33</id>
        <label>TRAPPC2L</label>
    </interactant>
    <organismsDiffer>false</organismsDiffer>
    <experiments>3</experiments>
</comment>
<comment type="interaction">
    <interactant intactId="EBI-533224">
        <id>P15884</id>
    </interactant>
    <interactant intactId="EBI-3918381">
        <id>Q96PN8</id>
        <label>TSSK3</label>
    </interactant>
    <organismsDiffer>false</organismsDiffer>
    <experiments>3</experiments>
</comment>
<comment type="interaction">
    <interactant intactId="EBI-533224">
        <id>P15884</id>
    </interactant>
    <interactant intactId="EBI-1797287">
        <id>Q15672</id>
        <label>TWIST1</label>
    </interactant>
    <organismsDiffer>false</organismsDiffer>
    <experiments>9</experiments>
</comment>
<comment type="interaction">
    <interactant intactId="EBI-533224">
        <id>P15884</id>
    </interactant>
    <interactant intactId="EBI-1797313">
        <id>Q8WVJ9</id>
        <label>TWIST2</label>
    </interactant>
    <organismsDiffer>false</organismsDiffer>
    <experiments>5</experiments>
</comment>
<comment type="interaction">
    <interactant intactId="EBI-533224">
        <id>P15884</id>
    </interactant>
    <interactant intactId="EBI-10309345">
        <id>Q9NX01</id>
        <label>TXNL4B</label>
    </interactant>
    <organismsDiffer>false</organismsDiffer>
    <experiments>4</experiments>
</comment>
<comment type="interaction">
    <interactant intactId="EBI-533224">
        <id>P15884</id>
    </interactant>
    <interactant intactId="EBI-5457544">
        <id>Q9BRU9</id>
        <label>UTP23</label>
    </interactant>
    <organismsDiffer>false</organismsDiffer>
    <experiments>3</experiments>
</comment>
<comment type="interaction">
    <interactant intactId="EBI-533224">
        <id>P15884</id>
    </interactant>
    <interactant intactId="EBI-10243107">
        <id>Q548N1</id>
        <label>VPS28</label>
    </interactant>
    <organismsDiffer>false</organismsDiffer>
    <experiments>3</experiments>
</comment>
<comment type="interaction">
    <interactant intactId="EBI-533224">
        <id>P15884</id>
    </interactant>
    <interactant intactId="EBI-357997">
        <id>P13010</id>
        <label>XRCC5</label>
    </interactant>
    <organismsDiffer>false</organismsDiffer>
    <experiments>2</experiments>
</comment>
<comment type="interaction">
    <interactant intactId="EBI-533224">
        <id>P15884</id>
    </interactant>
    <interactant intactId="EBI-353208">
        <id>P12956</id>
        <label>XRCC6</label>
    </interactant>
    <organismsDiffer>false</organismsDiffer>
    <experiments>2</experiments>
</comment>
<comment type="interaction">
    <interactant intactId="EBI-533224">
        <id>P15884</id>
    </interactant>
    <interactant intactId="EBI-359832">
        <id>P61981</id>
        <label>YWHAG</label>
    </interactant>
    <organismsDiffer>false</organismsDiffer>
    <experiments>3</experiments>
</comment>
<comment type="interaction">
    <interactant intactId="EBI-533224">
        <id>P15884</id>
    </interactant>
    <interactant intactId="EBI-10254561">
        <id>Q6UX98</id>
        <label>ZDHHC24</label>
    </interactant>
    <organismsDiffer>false</organismsDiffer>
    <experiments>3</experiments>
</comment>
<comment type="interaction">
    <interactant intactId="EBI-533224">
        <id>P15884</id>
    </interactant>
    <interactant intactId="EBI-2555767">
        <id>Q15973</id>
        <label>ZNF124</label>
    </interactant>
    <organismsDiffer>false</organismsDiffer>
    <experiments>3</experiments>
</comment>
<comment type="interaction">
    <interactant intactId="EBI-533224">
        <id>P15884</id>
    </interactant>
    <interactant intactId="EBI-740727">
        <id>Q8TAU3</id>
        <label>ZNF417</label>
    </interactant>
    <organismsDiffer>false</organismsDiffer>
    <experiments>3</experiments>
</comment>
<comment type="interaction">
    <interactant intactId="EBI-533224">
        <id>P15884</id>
    </interactant>
    <interactant intactId="EBI-6427977">
        <id>Q96SQ5</id>
        <label>ZNF587</label>
    </interactant>
    <organismsDiffer>false</organismsDiffer>
    <experiments>3</experiments>
</comment>
<comment type="interaction">
    <interactant intactId="EBI-533224">
        <id>P15884</id>
    </interactant>
    <interactant intactId="EBI-10242473">
        <id>Q53FW8</id>
    </interactant>
    <organismsDiffer>false</organismsDiffer>
    <experiments>3</experiments>
</comment>
<comment type="interaction">
    <interactant intactId="EBI-533224">
        <id>P15884</id>
    </interactant>
    <interactant intactId="EBI-7373758">
        <id>P26233</id>
        <label>ctnnb1</label>
    </interactant>
    <organismsDiffer>true</organismsDiffer>
    <experiments>2</experiments>
</comment>
<comment type="interaction">
    <interactant intactId="EBI-533224">
        <id>P15884</id>
    </interactant>
    <interactant intactId="EBI-25475877">
        <id>PRO_0000449627</id>
        <label>rep</label>
        <dbReference type="UniProtKB" id="P0DTD1"/>
    </interactant>
    <organismsDiffer>true</organismsDiffer>
    <experiments>3</experiments>
</comment>
<comment type="interaction">
    <interactant intactId="EBI-533224">
        <id>P15884</id>
    </interactant>
    <interactant intactId="EBI-9106822">
        <id>Q61473</id>
        <label>Sox17</label>
    </interactant>
    <organismsDiffer>true</organismsDiffer>
    <experiments>5</experiments>
</comment>
<comment type="interaction">
    <interactant intactId="EBI-533224">
        <id>P15884</id>
    </interactant>
    <interactant intactId="EBI-6262177">
        <id>Q06831</id>
        <label>Sox4</label>
    </interactant>
    <organismsDiffer>true</organismsDiffer>
    <experiments>2</experiments>
</comment>
<comment type="interaction">
    <interactant intactId="EBI-13636688">
        <id>P15884-3</id>
    </interactant>
    <interactant intactId="EBI-8637516">
        <id>Q9NXW9</id>
        <label>ALKBH4</label>
    </interactant>
    <organismsDiffer>false</organismsDiffer>
    <experiments>3</experiments>
</comment>
<comment type="interaction">
    <interactant intactId="EBI-13636688">
        <id>P15884-3</id>
    </interactant>
    <interactant intactId="EBI-602199">
        <id>Q12774</id>
        <label>ARHGEF5</label>
    </interactant>
    <organismsDiffer>false</organismsDiffer>
    <experiments>3</experiments>
</comment>
<comment type="interaction">
    <interactant intactId="EBI-13636688">
        <id>P15884-3</id>
    </interactant>
    <interactant intactId="EBI-10186132">
        <id>Q0P5N6</id>
        <label>ARL16</label>
    </interactant>
    <organismsDiffer>false</organismsDiffer>
    <experiments>3</experiments>
</comment>
<comment type="interaction">
    <interactant intactId="EBI-13636688">
        <id>P15884-3</id>
    </interactant>
    <interactant intactId="EBI-2609717">
        <id>Q8TDY4</id>
        <label>ASAP3</label>
    </interactant>
    <organismsDiffer>false</organismsDiffer>
    <experiments>3</experiments>
</comment>
<comment type="interaction">
    <interactant intactId="EBI-13636688">
        <id>P15884-3</id>
    </interactant>
    <interactant intactId="EBI-12108222">
        <id>Q9NQ33</id>
        <label>ASCL3</label>
    </interactant>
    <organismsDiffer>false</organismsDiffer>
    <experiments>3</experiments>
</comment>
<comment type="interaction">
    <interactant intactId="EBI-13636688">
        <id>P15884-3</id>
    </interactant>
    <interactant intactId="EBI-10254793">
        <id>Q6XD76</id>
        <label>ASCL4</label>
    </interactant>
    <organismsDiffer>false</organismsDiffer>
    <experiments>3</experiments>
</comment>
<comment type="interaction">
    <interactant intactId="EBI-13636688">
        <id>P15884-3</id>
    </interactant>
    <interactant intactId="EBI-12006308">
        <id>Q7Z3C6-3</id>
        <label>ATG9A</label>
    </interactant>
    <organismsDiffer>false</organismsDiffer>
    <experiments>3</experiments>
</comment>
<comment type="interaction">
    <interactant intactId="EBI-13636688">
        <id>P15884-3</id>
    </interactant>
    <interactant intactId="EBI-11976887">
        <id>Q8N100</id>
        <label>ATOH7</label>
    </interactant>
    <organismsDiffer>false</organismsDiffer>
    <experiments>3</experiments>
</comment>
<comment type="interaction">
    <interactant intactId="EBI-13636688">
        <id>P15884-3</id>
    </interactant>
    <interactant intactId="EBI-11990784">
        <id>A0A0C4DG94</id>
        <label>ATP11B</label>
    </interactant>
    <organismsDiffer>false</organismsDiffer>
    <experiments>3</experiments>
</comment>
<comment type="interaction">
    <interactant intactId="EBI-13636688">
        <id>P15884-3</id>
    </interactant>
    <interactant intactId="EBI-11977289">
        <id>Q9H503-2</id>
        <label>BANF2</label>
    </interactant>
    <organismsDiffer>false</organismsDiffer>
    <experiments>3</experiments>
</comment>
<comment type="interaction">
    <interactant intactId="EBI-13636688">
        <id>P15884-3</id>
    </interactant>
    <interactant intactId="EBI-10247136">
        <id>Q5TBC7</id>
        <label>BCL2L15</label>
    </interactant>
    <organismsDiffer>false</organismsDiffer>
    <experiments>3</experiments>
</comment>
<comment type="interaction">
    <interactant intactId="EBI-13636688">
        <id>P15884-3</id>
    </interactant>
    <interactant intactId="EBI-2874661">
        <id>Q9BV19</id>
        <label>C1orf50</label>
    </interactant>
    <organismsDiffer>false</organismsDiffer>
    <experiments>3</experiments>
</comment>
<comment type="interaction">
    <interactant intactId="EBI-13636688">
        <id>P15884-3</id>
    </interactant>
    <interactant intactId="EBI-11954144">
        <id>O43439-4</id>
        <label>CBFA2T2</label>
    </interactant>
    <organismsDiffer>false</organismsDiffer>
    <experiments>3</experiments>
</comment>
<comment type="interaction">
    <interactant intactId="EBI-13636688">
        <id>P15884-3</id>
    </interactant>
    <interactant intactId="EBI-741406">
        <id>P51946</id>
        <label>CCNH</label>
    </interactant>
    <organismsDiffer>false</organismsDiffer>
    <experiments>3</experiments>
</comment>
<comment type="interaction">
    <interactant intactId="EBI-13636688">
        <id>P15884-3</id>
    </interactant>
    <interactant intactId="EBI-295634">
        <id>Q16543</id>
        <label>CDC37</label>
    </interactant>
    <organismsDiffer>false</organismsDiffer>
    <experiments>3</experiments>
</comment>
<comment type="interaction">
    <interactant intactId="EBI-13636688">
        <id>P15884-3</id>
    </interactant>
    <interactant intactId="EBI-711290">
        <id>P42773</id>
        <label>CDKN2C</label>
    </interactant>
    <organismsDiffer>false</organismsDiffer>
    <experiments>3</experiments>
</comment>
<comment type="interaction">
    <interactant intactId="EBI-13636688">
        <id>P15884-3</id>
    </interactant>
    <interactant intactId="EBI-1020839">
        <id>Q13111</id>
        <label>CHAF1A</label>
    </interactant>
    <organismsDiffer>false</organismsDiffer>
    <experiments>3</experiments>
</comment>
<comment type="interaction">
    <interactant intactId="EBI-13636688">
        <id>P15884-3</id>
    </interactant>
    <interactant intactId="EBI-456371">
        <id>P61024</id>
        <label>CKS1B</label>
    </interactant>
    <organismsDiffer>false</organismsDiffer>
    <experiments>3</experiments>
</comment>
<comment type="interaction">
    <interactant intactId="EBI-13636688">
        <id>P15884-3</id>
    </interactant>
    <interactant intactId="EBI-11980535">
        <id>P51800-3</id>
        <label>CLCNKA</label>
    </interactant>
    <organismsDiffer>false</organismsDiffer>
    <experiments>3</experiments>
</comment>
<comment type="interaction">
    <interactant intactId="EBI-13636688">
        <id>P15884-3</id>
    </interactant>
    <interactant intactId="EBI-5458774">
        <id>Q86WW8</id>
        <label>COA5</label>
    </interactant>
    <organismsDiffer>false</organismsDiffer>
    <experiments>3</experiments>
</comment>
<comment type="interaction">
    <interactant intactId="EBI-13636688">
        <id>P15884-3</id>
    </interactant>
    <interactant intactId="EBI-7097057">
        <id>Q96FN4</id>
        <label>CPNE2</label>
    </interactant>
    <organismsDiffer>false</organismsDiffer>
    <experiments>3</experiments>
</comment>
<comment type="interaction">
    <interactant intactId="EBI-13636688">
        <id>P15884-3</id>
    </interactant>
    <interactant intactId="EBI-351257">
        <id>P26196</id>
        <label>DDX6</label>
    </interactant>
    <organismsDiffer>false</organismsDiffer>
    <experiments>3</experiments>
</comment>
<comment type="interaction">
    <interactant intactId="EBI-13636688">
        <id>P15884-3</id>
    </interactant>
    <interactant intactId="EBI-1220259">
        <id>P04053</id>
        <label>DNTT</label>
    </interactant>
    <organismsDiffer>false</organismsDiffer>
    <experiments>3</experiments>
</comment>
<comment type="interaction">
    <interactant intactId="EBI-13636688">
        <id>P15884-3</id>
    </interactant>
    <interactant intactId="EBI-724940">
        <id>Q9BVJ7</id>
        <label>DUSP23</label>
    </interactant>
    <organismsDiffer>false</organismsDiffer>
    <experiments>3</experiments>
</comment>
<comment type="interaction">
    <interactant intactId="EBI-13636688">
        <id>P15884-3</id>
    </interactant>
    <interactant intactId="EBI-1054321">
        <id>Q68J44</id>
        <label>DUSP29</label>
    </interactant>
    <organismsDiffer>false</organismsDiffer>
    <experiments>3</experiments>
</comment>
<comment type="interaction">
    <interactant intactId="EBI-13636688">
        <id>P15884-3</id>
    </interactant>
    <interactant intactId="EBI-743105">
        <id>Q5JVL4</id>
        <label>EFHC1</label>
    </interactant>
    <organismsDiffer>false</organismsDiffer>
    <experiments>6</experiments>
</comment>
<comment type="interaction">
    <interactant intactId="EBI-13636688">
        <id>P15884-3</id>
    </interactant>
    <interactant intactId="EBI-10182490">
        <id>O15197-2</id>
        <label>EPHB6</label>
    </interactant>
    <organismsDiffer>false</organismsDiffer>
    <experiments>3</experiments>
</comment>
<comment type="interaction">
    <interactant intactId="EBI-13636688">
        <id>P15884-3</id>
    </interactant>
    <interactant intactId="EBI-742102">
        <id>Q8IYI6</id>
        <label>EXOC8</label>
    </interactant>
    <organismsDiffer>false</organismsDiffer>
    <experiments>3</experiments>
</comment>
<comment type="interaction">
    <interactant intactId="EBI-13636688">
        <id>P15884-3</id>
    </interactant>
    <interactant intactId="EBI-1752811">
        <id>Q9BQ89</id>
        <label>FAM110A</label>
    </interactant>
    <organismsDiffer>false</organismsDiffer>
    <experiments>3</experiments>
</comment>
<comment type="interaction">
    <interactant intactId="EBI-13636688">
        <id>P15884-3</id>
    </interactant>
    <interactant intactId="EBI-11976617">
        <id>Q6QHK4</id>
        <label>FIGLA</label>
    </interactant>
    <organismsDiffer>false</organismsDiffer>
    <experiments>3</experiments>
</comment>
<comment type="interaction">
    <interactant intactId="EBI-13636688">
        <id>P15884-3</id>
    </interactant>
    <interactant intactId="EBI-739361">
        <id>Q9UBY9</id>
        <label>HSPB7</label>
    </interactant>
    <organismsDiffer>false</organismsDiffer>
    <experiments>3</experiments>
</comment>
<comment type="interaction">
    <interactant intactId="EBI-13636688">
        <id>P15884-3</id>
    </interactant>
    <interactant intactId="EBI-1215527">
        <id>P41134</id>
        <label>ID1</label>
    </interactant>
    <organismsDiffer>false</organismsDiffer>
    <experiments>3</experiments>
</comment>
<comment type="interaction">
    <interactant intactId="EBI-13636688">
        <id>P15884-3</id>
    </interactant>
    <interactant intactId="EBI-1387094">
        <id>Q02535</id>
        <label>ID3</label>
    </interactant>
    <organismsDiffer>false</organismsDiffer>
    <experiments>3</experiments>
</comment>
<comment type="interaction">
    <interactant intactId="EBI-13636688">
        <id>P15884-3</id>
    </interactant>
    <interactant intactId="EBI-6426443">
        <id>Q2WGJ6</id>
        <label>KLHL38</label>
    </interactant>
    <organismsDiffer>false</organismsDiffer>
    <experiments>3</experiments>
</comment>
<comment type="interaction">
    <interactant intactId="EBI-13636688">
        <id>P15884-3</id>
    </interactant>
    <interactant intactId="EBI-16429099">
        <id>A0A0S2Z5S9</id>
        <label>LHX4</label>
    </interactant>
    <organismsDiffer>false</organismsDiffer>
    <experiments>3</experiments>
</comment>
<comment type="interaction">
    <interactant intactId="EBI-13636688">
        <id>P15884-3</id>
    </interactant>
    <interactant intactId="EBI-2798728">
        <id>P61968</id>
        <label>LMO4</label>
    </interactant>
    <organismsDiffer>false</organismsDiffer>
    <experiments>3</experiments>
</comment>
<comment type="interaction">
    <interactant intactId="EBI-13636688">
        <id>P15884-3</id>
    </interactant>
    <interactant intactId="EBI-77889">
        <id>Q9UI95</id>
        <label>MAD2L2</label>
    </interactant>
    <organismsDiffer>false</organismsDiffer>
    <experiments>3</experiments>
</comment>
<comment type="interaction">
    <interactant intactId="EBI-13636688">
        <id>P15884-3</id>
    </interactant>
    <interactant intactId="EBI-947402">
        <id>O60336</id>
        <label>MAPKBP1</label>
    </interactant>
    <organismsDiffer>false</organismsDiffer>
    <experiments>3</experiments>
</comment>
<comment type="interaction">
    <interactant intactId="EBI-13636688">
        <id>P15884-3</id>
    </interactant>
    <interactant intactId="EBI-5235902">
        <id>Q9Y4F3</id>
        <label>MARF1</label>
    </interactant>
    <organismsDiffer>false</organismsDiffer>
    <experiments>3</experiments>
</comment>
<comment type="interaction">
    <interactant intactId="EBI-13636688">
        <id>P15884-3</id>
    </interactant>
    <interactant intactId="EBI-6262458">
        <id>O15232</id>
        <label>MATN3</label>
    </interactant>
    <organismsDiffer>false</organismsDiffer>
    <experiments>3</experiments>
</comment>
<comment type="interaction">
    <interactant intactId="EBI-13636688">
        <id>P15884-3</id>
    </interactant>
    <interactant intactId="EBI-1104564">
        <id>Q9Y316</id>
        <label>MEMO1</label>
    </interactant>
    <organismsDiffer>false</organismsDiffer>
    <experiments>3</experiments>
</comment>
<comment type="interaction">
    <interactant intactId="EBI-13636688">
        <id>P15884-3</id>
    </interactant>
    <interactant intactId="EBI-12022316">
        <id>Q9BUN1</id>
        <label>MENT</label>
    </interactant>
    <organismsDiffer>false</organismsDiffer>
    <experiments>3</experiments>
</comment>
<comment type="interaction">
    <interactant intactId="EBI-13636688">
        <id>P15884-3</id>
    </interactant>
    <interactant intactId="EBI-10269566">
        <id>Q8NDC4</id>
        <label>MORN4</label>
    </interactant>
    <organismsDiffer>false</organismsDiffer>
    <experiments>3</experiments>
</comment>
<comment type="interaction">
    <interactant intactId="EBI-13636688">
        <id>P15884-3</id>
    </interactant>
    <interactant intactId="EBI-740310">
        <id>O60682</id>
        <label>MSC</label>
    </interactant>
    <organismsDiffer>false</organismsDiffer>
    <experiments>3</experiments>
</comment>
<comment type="interaction">
    <interactant intactId="EBI-13636688">
        <id>P15884-3</id>
    </interactant>
    <interactant intactId="EBI-11991020">
        <id>A6NI15</id>
        <label>MSGN1</label>
    </interactant>
    <organismsDiffer>false</organismsDiffer>
    <experiments>3</experiments>
</comment>
<comment type="interaction">
    <interactant intactId="EBI-13636688">
        <id>P15884-3</id>
    </interactant>
    <interactant intactId="EBI-7950783">
        <id>Q96JP2</id>
        <label>MYO15B</label>
    </interactant>
    <organismsDiffer>false</organismsDiffer>
    <experiments>3</experiments>
</comment>
<comment type="interaction">
    <interactant intactId="EBI-13636688">
        <id>P15884-3</id>
    </interactant>
    <interactant intactId="EBI-14093244">
        <id>Q9ULV0-2</id>
        <label>MYO5B</label>
    </interactant>
    <organismsDiffer>false</organismsDiffer>
    <experiments>3</experiments>
</comment>
<comment type="interaction">
    <interactant intactId="EBI-13636688">
        <id>P15884-3</id>
    </interactant>
    <interactant intactId="EBI-10249760">
        <id>Q9UHB4</id>
        <label>NDOR1</label>
    </interactant>
    <organismsDiffer>false</organismsDiffer>
    <experiments>3</experiments>
</comment>
<comment type="interaction">
    <interactant intactId="EBI-13636688">
        <id>P15884-3</id>
    </interactant>
    <interactant intactId="EBI-6979889">
        <id>Q92692-2</id>
        <label>NECTIN2</label>
    </interactant>
    <organismsDiffer>false</organismsDiffer>
    <experiments>3</experiments>
</comment>
<comment type="interaction">
    <interactant intactId="EBI-13636688">
        <id>P15884-3</id>
    </interactant>
    <interactant intactId="EBI-11750983">
        <id>Q9HC98-4</id>
        <label>NEK6</label>
    </interactant>
    <organismsDiffer>false</organismsDiffer>
    <experiments>3</experiments>
</comment>
<comment type="interaction">
    <interactant intactId="EBI-13636688">
        <id>P15884-3</id>
    </interactant>
    <interactant intactId="EBI-3908303">
        <id>Q13562</id>
        <label>NEUROD1</label>
    </interactant>
    <organismsDiffer>false</organismsDiffer>
    <experiments>3</experiments>
</comment>
<comment type="interaction">
    <interactant intactId="EBI-13636688">
        <id>P15884-3</id>
    </interactant>
    <interactant intactId="EBI-3917781">
        <id>Q9HD90</id>
        <label>NEUROD4</label>
    </interactant>
    <organismsDiffer>false</organismsDiffer>
    <experiments>3</experiments>
</comment>
<comment type="interaction">
    <interactant intactId="EBI-13636688">
        <id>P15884-3</id>
    </interactant>
    <interactant intactId="EBI-10328570">
        <id>Q9Y4Z2</id>
        <label>NEUROG3</label>
    </interactant>
    <organismsDiffer>false</organismsDiffer>
    <experiments>4</experiments>
</comment>
<comment type="interaction">
    <interactant intactId="EBI-13636688">
        <id>P15884-3</id>
    </interactant>
    <interactant intactId="EBI-11990542">
        <id>Q8NET5</id>
        <label>NFAM1</label>
    </interactant>
    <organismsDiffer>false</organismsDiffer>
    <experiments>3</experiments>
</comment>
<comment type="interaction">
    <interactant intactId="EBI-13636688">
        <id>P15884-3</id>
    </interactant>
    <interactant intactId="EBI-10271199">
        <id>Q8NI38</id>
        <label>NFKBID</label>
    </interactant>
    <organismsDiffer>false</organismsDiffer>
    <experiments>3</experiments>
</comment>
<comment type="interaction">
    <interactant intactId="EBI-13636688">
        <id>P15884-3</id>
    </interactant>
    <interactant intactId="EBI-5378683">
        <id>Q02577</id>
        <label>NHLH2</label>
    </interactant>
    <organismsDiffer>false</organismsDiffer>
    <experiments>3</experiments>
</comment>
<comment type="interaction">
    <interactant intactId="EBI-13636688">
        <id>P15884-3</id>
    </interactant>
    <interactant intactId="EBI-744782">
        <id>Q9Y5B8</id>
        <label>NME7</label>
    </interactant>
    <organismsDiffer>false</organismsDiffer>
    <experiments>3</experiments>
</comment>
<comment type="interaction">
    <interactant intactId="EBI-13636688">
        <id>P15884-3</id>
    </interactant>
    <interactant intactId="EBI-12025760">
        <id>Q86UR1-2</id>
        <label>NOXA1</label>
    </interactant>
    <organismsDiffer>false</organismsDiffer>
    <experiments>3</experiments>
</comment>
<comment type="interaction">
    <interactant intactId="EBI-13636688">
        <id>P15884-3</id>
    </interactant>
    <interactant intactId="EBI-10297093">
        <id>Q9BRQ3</id>
        <label>NUDT22</label>
    </interactant>
    <organismsDiffer>false</organismsDiffer>
    <experiments>3</experiments>
</comment>
<comment type="interaction">
    <interactant intactId="EBI-13636688">
        <id>P15884-3</id>
    </interactant>
    <interactant intactId="EBI-12128194">
        <id>Q96DL1-3</id>
        <label>NXPE2</label>
    </interactant>
    <organismsDiffer>false</organismsDiffer>
    <experiments>3</experiments>
</comment>
<comment type="interaction">
    <interactant intactId="EBI-13636688">
        <id>P15884-3</id>
    </interactant>
    <interactant intactId="EBI-10698339">
        <id>Q9NPJ8-3</id>
        <label>NXT2</label>
    </interactant>
    <organismsDiffer>false</organismsDiffer>
    <experiments>3</experiments>
</comment>
<comment type="interaction">
    <interactant intactId="EBI-13636688">
        <id>P15884-3</id>
    </interactant>
    <interactant intactId="EBI-12005356">
        <id>Q96PB7-3</id>
        <label>OLFM3</label>
    </interactant>
    <organismsDiffer>false</organismsDiffer>
    <experiments>3</experiments>
</comment>
<comment type="interaction">
    <interactant intactId="EBI-13636688">
        <id>P15884-3</id>
    </interactant>
    <interactant intactId="EBI-12837654">
        <id>Q8WXA2-2</id>
        <label>PATE1</label>
    </interactant>
    <organismsDiffer>false</organismsDiffer>
    <experiments>3</experiments>
</comment>
<comment type="interaction">
    <interactant intactId="EBI-13636688">
        <id>P15884-3</id>
    </interactant>
    <interactant intactId="EBI-2557649">
        <id>Q9Y3C6</id>
        <label>PPIL1</label>
    </interactant>
    <organismsDiffer>false</organismsDiffer>
    <experiments>3</experiments>
</comment>
<comment type="interaction">
    <interactant intactId="EBI-13636688">
        <id>P15884-3</id>
    </interactant>
    <interactant intactId="EBI-1055693">
        <id>O75771</id>
        <label>RAD51D</label>
    </interactant>
    <organismsDiffer>false</organismsDiffer>
    <experiments>3</experiments>
</comment>
<comment type="interaction">
    <interactant intactId="EBI-13636688">
        <id>P15884-3</id>
    </interactant>
    <interactant intactId="EBI-10253121">
        <id>Q6P9E2</id>
        <label>RECK</label>
    </interactant>
    <organismsDiffer>false</organismsDiffer>
    <experiments>3</experiments>
</comment>
<comment type="interaction">
    <interactant intactId="EBI-13636688">
        <id>P15884-3</id>
    </interactant>
    <interactant intactId="EBI-16428950">
        <id>A0A0S2Z4G9</id>
        <label>RNF6</label>
    </interactant>
    <organismsDiffer>false</organismsDiffer>
    <experiments>3</experiments>
</comment>
<comment type="interaction">
    <interactant intactId="EBI-13636688">
        <id>P15884-3</id>
    </interactant>
    <interactant intactId="EBI-748350">
        <id>Q9UHP6</id>
        <label>RSPH14</label>
    </interactant>
    <organismsDiffer>false</organismsDiffer>
    <experiments>3</experiments>
</comment>
<comment type="interaction">
    <interactant intactId="EBI-13636688">
        <id>P15884-3</id>
    </interactant>
    <interactant intactId="EBI-17492262">
        <id>Q7RTU7</id>
        <label>SCX</label>
    </interactant>
    <organismsDiffer>false</organismsDiffer>
    <experiments>3</experiments>
</comment>
<comment type="interaction">
    <interactant intactId="EBI-13636688">
        <id>P15884-3</id>
    </interactant>
    <interactant intactId="EBI-727004">
        <id>O00560</id>
        <label>SDCBP</label>
    </interactant>
    <organismsDiffer>false</organismsDiffer>
    <experiments>3</experiments>
</comment>
<comment type="interaction">
    <interactant intactId="EBI-13636688">
        <id>P15884-3</id>
    </interactant>
    <interactant intactId="EBI-10320311">
        <id>Q9UDX3</id>
        <label>SEC14L4</label>
    </interactant>
    <organismsDiffer>false</organismsDiffer>
    <experiments>3</experiments>
</comment>
<comment type="interaction">
    <interactant intactId="EBI-13636688">
        <id>P15884-3</id>
    </interactant>
    <interactant intactId="EBI-743117">
        <id>Q96ES7</id>
        <label>SGF29</label>
    </interactant>
    <organismsDiffer>false</organismsDiffer>
    <experiments>3</experiments>
</comment>
<comment type="interaction">
    <interactant intactId="EBI-13636688">
        <id>P15884-3</id>
    </interactant>
    <interactant intactId="EBI-2872322">
        <id>Q9H0W8</id>
        <label>SMG9</label>
    </interactant>
    <organismsDiffer>false</organismsDiffer>
    <experiments>3</experiments>
</comment>
<comment type="interaction">
    <interactant intactId="EBI-13636688">
        <id>P15884-3</id>
    </interactant>
    <interactant intactId="EBI-12354035">
        <id>Q9Y5K1-2</id>
        <label>SPO11</label>
    </interactant>
    <organismsDiffer>false</organismsDiffer>
    <experiments>3</experiments>
</comment>
<comment type="interaction">
    <interactant intactId="EBI-13636688">
        <id>P15884-3</id>
    </interactant>
    <interactant intactId="EBI-12017416">
        <id>Q9BX59</id>
        <label>TAPBPL</label>
    </interactant>
    <organismsDiffer>false</organismsDiffer>
    <experiments>3</experiments>
</comment>
<comment type="interaction">
    <interactant intactId="EBI-13636688">
        <id>P15884-3</id>
    </interactant>
    <interactant intactId="EBI-12127592">
        <id>Q7RTU1</id>
        <label>TCF23</label>
    </interactant>
    <organismsDiffer>false</organismsDiffer>
    <experiments>3</experiments>
</comment>
<comment type="interaction">
    <interactant intactId="EBI-13636688">
        <id>P15884-3</id>
    </interactant>
    <interactant intactId="EBI-18239606">
        <id>Q7RTU0</id>
        <label>TCF24</label>
    </interactant>
    <organismsDiffer>false</organismsDiffer>
    <experiments>3</experiments>
</comment>
<comment type="interaction">
    <interactant intactId="EBI-13636688">
        <id>P15884-3</id>
    </interactant>
    <interactant intactId="EBI-11119202">
        <id>Q9UL33-2</id>
        <label>TRAPPC2L</label>
    </interactant>
    <organismsDiffer>false</organismsDiffer>
    <experiments>3</experiments>
</comment>
<comment type="interaction">
    <interactant intactId="EBI-13636688">
        <id>P15884-3</id>
    </interactant>
    <interactant intactId="EBI-2130449">
        <id>Q6AZZ1</id>
        <label>TRIM68</label>
    </interactant>
    <organismsDiffer>false</organismsDiffer>
    <experiments>3</experiments>
</comment>
<comment type="interaction">
    <interactant intactId="EBI-13636688">
        <id>P15884-3</id>
    </interactant>
    <interactant intactId="EBI-11059915">
        <id>Q8N7C3</id>
        <label>TRIML2</label>
    </interactant>
    <organismsDiffer>false</organismsDiffer>
    <experiments>3</experiments>
</comment>
<comment type="interaction">
    <interactant intactId="EBI-13636688">
        <id>P15884-3</id>
    </interactant>
    <interactant intactId="EBI-8994397">
        <id>Q5T7W7</id>
        <label>TSTD2</label>
    </interactant>
    <organismsDiffer>false</organismsDiffer>
    <experiments>3</experiments>
</comment>
<comment type="interaction">
    <interactant intactId="EBI-13636688">
        <id>P15884-3</id>
    </interactant>
    <interactant intactId="EBI-11980463">
        <id>Q9UNY4-2</id>
        <label>TTF2</label>
    </interactant>
    <organismsDiffer>false</organismsDiffer>
    <experiments>3</experiments>
</comment>
<comment type="interaction">
    <interactant intactId="EBI-13636688">
        <id>P15884-3</id>
    </interactant>
    <interactant intactId="EBI-1380492">
        <id>Q8TF42</id>
        <label>UBASH3B</label>
    </interactant>
    <organismsDiffer>false</organismsDiffer>
    <experiments>3</experiments>
</comment>
<comment type="interaction">
    <interactant intactId="EBI-13636688">
        <id>P15884-3</id>
    </interactant>
    <interactant intactId="EBI-10254561">
        <id>Q6UX98</id>
        <label>ZDHHC24</label>
    </interactant>
    <organismsDiffer>false</organismsDiffer>
    <experiments>3</experiments>
</comment>
<comment type="interaction">
    <interactant intactId="EBI-13636688">
        <id>P15884-3</id>
    </interactant>
    <interactant intactId="EBI-747061">
        <id>O75800</id>
        <label>ZMYND10</label>
    </interactant>
    <organismsDiffer>false</organismsDiffer>
    <experiments>3</experiments>
</comment>
<comment type="interaction">
    <interactant intactId="EBI-13636688">
        <id>P15884-3</id>
    </interactant>
    <interactant intactId="EBI-2555767">
        <id>Q15973</id>
        <label>ZNF124</label>
    </interactant>
    <organismsDiffer>false</organismsDiffer>
    <experiments>3</experiments>
</comment>
<comment type="interaction">
    <interactant intactId="EBI-13636688">
        <id>P15884-3</id>
    </interactant>
    <interactant intactId="EBI-6427977">
        <id>Q96SQ5</id>
        <label>ZNF587</label>
    </interactant>
    <organismsDiffer>false</organismsDiffer>
    <experiments>3</experiments>
</comment>
<comment type="interaction">
    <interactant intactId="EBI-13636688">
        <id>P15884-3</id>
    </interactant>
    <interactant intactId="EBI-16429014">
        <id>A0A0S2Z5X4</id>
        <label>ZNF688</label>
    </interactant>
    <organismsDiffer>false</organismsDiffer>
    <experiments>3</experiments>
</comment>
<comment type="interaction">
    <interactant intactId="EBI-13636688">
        <id>P15884-3</id>
    </interactant>
    <interactant intactId="EBI-16429989">
        <id>A0A0S2Z6P0</id>
        <label>ZNF688</label>
    </interactant>
    <organismsDiffer>false</organismsDiffer>
    <experiments>3</experiments>
</comment>
<comment type="subcellular location">
    <subcellularLocation>
        <location evidence="3 12">Nucleus</location>
    </subcellularLocation>
</comment>
<comment type="alternative products">
    <event type="alternative splicing"/>
    <isoform>
        <id>P15884-1</id>
        <name>SEF2-1B</name>
        <name>B-</name>
        <sequence type="displayed"/>
    </isoform>
    <isoform>
        <id>P15884-2</id>
        <name>SEF2-1A</name>
        <name>A+</name>
        <sequence type="described" ref="VSP_030819 VSP_002111 VSP_002112"/>
    </isoform>
    <isoform>
        <id>P15884-3</id>
        <name>SEF2-1D</name>
        <name>B+</name>
        <sequence type="described" ref="VSP_002112"/>
    </isoform>
    <isoform>
        <id>P15884-4</id>
        <name>B+delta</name>
        <sequence type="described" ref="VSP_044340 VSP_002112"/>
    </isoform>
    <isoform>
        <id>P15884-5</id>
        <name>B-delta</name>
        <sequence type="described" ref="VSP_044340"/>
    </isoform>
    <isoform>
        <id>P15884-6</id>
        <name>A-</name>
        <sequence type="described" ref="VSP_044336 VSP_044337 VSP_044340"/>
    </isoform>
    <isoform>
        <id>P15884-7</id>
        <name>G-</name>
        <sequence type="described" ref="VSP_044334 VSP_044338 VSP_044339"/>
    </isoform>
    <isoform>
        <id>P15884-8</id>
        <name>H-</name>
        <sequence type="described" ref="VSP_044335 VSP_057364"/>
    </isoform>
    <isoform>
        <id>P15884-9</id>
        <name>D-</name>
        <sequence type="described" ref="VSP_045149"/>
    </isoform>
    <isoform>
        <id>P15884-10</id>
        <name>F-</name>
        <sequence type="described" ref="VSP_045151"/>
    </isoform>
    <isoform>
        <id>P15884-11</id>
        <name>11</name>
        <sequence type="described" ref="VSP_045150 VSP_044339 VSP_002112"/>
    </isoform>
    <isoform>
        <id>P15884-12</id>
        <name>E-</name>
        <sequence type="described" ref="VSP_047082 VSP_047083"/>
    </isoform>
    <isoform>
        <id>P15884-13</id>
        <name>13</name>
        <sequence type="described" ref="VSP_047081 VSP_002112"/>
    </isoform>
    <isoform>
        <id>P15884-14</id>
        <name>C-</name>
        <sequence type="described" ref="VSP_047081"/>
    </isoform>
    <isoform>
        <id>P15884-15</id>
        <name>C-delta</name>
        <sequence type="described" ref="VSP_047081 VSP_044340"/>
    </isoform>
    <isoform>
        <id>P15884-16</id>
        <name>I-</name>
        <sequence type="described" ref="VSP_054279"/>
    </isoform>
    <text>Additional isoforms seem to exist.</text>
</comment>
<comment type="tissue specificity">
    <text>Expressed in adult heart, brain, placenta, skeletal muscle and to a lesser extent in the lung. In developing embryonic tissues, expression mostly occurs in the brain.</text>
</comment>
<comment type="domain">
    <text evidence="7">The 9aaTAD motif is a transactivation domain present in a large number of yeast and animal transcription factors.</text>
</comment>
<comment type="disease" evidence="5 6 8 9 10 11 12 16">
    <disease id="DI-02168">
        <name>Pitt-Hopkins syndrome</name>
        <acronym>PTHS</acronym>
        <description>A syndrome characterized by intellectual disability, wide mouth and distinctive facial features, and intermittent hyperventilation followed by apnea. Features include intellectual disability with severe speech impairment, normal growth parameters at birth, postnatal microcephaly, breathing anomalies, severe motor developmental delay, motor incoordination, ocular anomalies, constipation, seizures, typical behavior and subtle brain abnormalities.</description>
        <dbReference type="MIM" id="610954"/>
    </disease>
    <text>The disease is caused by variants affecting the gene represented in this entry.</text>
</comment>
<comment type="disease" evidence="14 15 18">
    <disease id="DI-04548">
        <name>Corneal dystrophy, Fuchs endothelial, 3</name>
        <acronym>FECD3</acronym>
        <description>A late-onset form of Fuchs endothelial corneal dystrophy, a disease caused by loss of endothelium of the central cornea. It is characterized by focal wart-like guttata that arise from Descemet membrane and develop in the central cornea, epithelial blisters, reduced vision and pain. Descemet membrane is thickened by abnormal collagenous deposition.</description>
        <dbReference type="MIM" id="613267"/>
    </disease>
    <text evidence="14 15 18">The disease is caused by variants affecting the gene represented in this entry. Causative mutations are heterozygous TCF4 intronic trinucleotide repeat expansions (CTG)n.</text>
</comment>
<comment type="disease">
    <text evidence="19">Defects in TCF4 may cause autosomal dominant symmetrical acral keratoderma (SAK)syndrome. Symmetrical acral keratodermadefines is characterized by brown/black hyperkeratotic patches symmetrically distributed on the acral regions, especially the wrists, ankles, dorsa of hands, fingers and feet affects young and middle aged men. Patients have epidermis thickened by acanthosis and compact stratum corneum (PubMed:28921696).</text>
</comment>
<comment type="sequence caution" evidence="25">
    <conflict type="miscellaneous discrepancy">
        <sequence resource="EMBL-CDS" id="AAA60310"/>
    </conflict>
    <text>Incomplete and probable erroneous sequence.</text>
</comment>
<comment type="sequence caution" evidence="25">
    <conflict type="miscellaneous discrepancy">
        <sequence resource="EMBL-CDS" id="AAA60312"/>
    </conflict>
    <text>Incomplete and probable erroneous sequence.</text>
</comment>